<feature type="initiator methionine" description="Removed">
    <location>
        <position position="1"/>
    </location>
</feature>
<feature type="chain" id="PRO_0000056050" description="RING finger protein 11">
    <location>
        <begin position="2"/>
        <end position="154"/>
    </location>
</feature>
<feature type="zinc finger region" description="RING-type" evidence="3">
    <location>
        <begin position="99"/>
        <end position="140"/>
    </location>
</feature>
<feature type="region of interest" description="Disordered" evidence="4">
    <location>
        <begin position="1"/>
        <end position="53"/>
    </location>
</feature>
<feature type="short sequence motif" description="PPxY motif">
    <location>
        <begin position="37"/>
        <end position="40"/>
    </location>
</feature>
<feature type="compositionally biased region" description="Polar residues" evidence="4">
    <location>
        <begin position="1"/>
        <end position="12"/>
    </location>
</feature>
<feature type="compositionally biased region" description="Low complexity" evidence="4">
    <location>
        <begin position="41"/>
        <end position="51"/>
    </location>
</feature>
<feature type="modified residue" description="Phosphoserine" evidence="16">
    <location>
        <position position="14"/>
    </location>
</feature>
<feature type="modified residue" description="Phosphoserine" evidence="2">
    <location>
        <position position="25"/>
    </location>
</feature>
<feature type="modified residue" description="Phosphothreonine; by PKB/AKT1" evidence="8">
    <location>
        <position position="135"/>
    </location>
</feature>
<feature type="lipid moiety-binding region" description="N-myristoyl glycine" evidence="13 14">
    <location>
        <position position="2"/>
    </location>
</feature>
<feature type="lipid moiety-binding region" description="S-palmitoyl cysteine" evidence="14">
    <location>
        <position position="4"/>
    </location>
</feature>
<feature type="sequence variant" id="VAR_058272" description="In dbSNP:rs12077069.">
    <original>D</original>
    <variation>E</variation>
    <location>
        <position position="11"/>
    </location>
</feature>
<feature type="mutagenesis site" description="Loss of myristoylation. Change in subcellular location: Becomes diffused throughout the cytosol. Strong reduction of ubiquitination. Reduced efficiency of ITCH-binding." evidence="14">
    <original>G</original>
    <variation>A</variation>
    <location>
        <position position="2"/>
    </location>
</feature>
<feature type="mutagenesis site" description="Change in subcellular location: Becomes partially cytosolic and retained in association with the Golgi apparatus. Partial reduction of ubiquitination." evidence="14">
    <original>C</original>
    <variation>S</variation>
    <location>
        <position position="4"/>
    </location>
</feature>
<feature type="mutagenesis site" description="Loss of GGA1-binding." evidence="14">
    <original>D</original>
    <variation>A</variation>
    <location>
        <position position="12"/>
    </location>
</feature>
<feature type="mutagenesis site" description="Loss of GGA1-binding." evidence="14">
    <original>L</original>
    <variation>A</variation>
    <location>
        <position position="15"/>
    </location>
</feature>
<feature type="mutagenesis site" description="Loss of GGA1-binding." evidence="14">
    <original>L</original>
    <variation>A</variation>
    <location>
        <position position="16"/>
    </location>
</feature>
<feature type="mutagenesis site" description="Loss of ITCH-, SMURF2- and WWP1-binding. Partial loss of ubiquitination by ITCH. No effect on STAMBP-binding; when associated with S-99 and S-102. Persistent TNF-mediated NFKBIA phosphorylation. Loss of stimulus-dependent complex formation with TAX1BP1, TNFAIP3 and RIPK1." evidence="5 6 7 11 12">
    <original>Y</original>
    <variation>A</variation>
    <location>
        <position position="40"/>
    </location>
</feature>
<feature type="mutagenesis site" description="No effect on STAMBP- and SMURF2-binding; when associated with S-102. Persistent TNF-mediated NFKBIA phosphorylation. No effect on STAMBP-binding; when associated with A-40 and S-102. No effect on ubiquitination by ITCH; when associated with S-102. Loss of stimulus-dependent complex formation with TAX1BP1, TNFAIP3 and RIPK1." evidence="6 7 12 14">
    <original>C</original>
    <variation>S</variation>
    <location>
        <position position="99"/>
    </location>
</feature>
<feature type="mutagenesis site" description="No effect on STAMBP- and SMURF2-binding; when associated with S-99. No effect on ubiquitination by ITCH; when associated with S-102. No effect on STAMBP-binding; when associated with A-40 and S-99." evidence="6 7 14">
    <original>C</original>
    <variation>S</variation>
    <location>
        <position position="102"/>
    </location>
</feature>
<feature type="mutagenesis site" description="Loss of UBE2N-binding. No gain of UBE2L3-binding." evidence="10">
    <original>M</original>
    <variation>A</variation>
    <variation>G</variation>
    <location>
        <position position="103"/>
    </location>
</feature>
<feature type="mutagenesis site" description="No effect on UBE2N-binding. No gain of UBE2L3-binding; when associated with L-127 and L-128." evidence="10">
    <original>M</original>
    <variation>L</variation>
    <location>
        <position position="103"/>
    </location>
</feature>
<feature type="mutagenesis site" description="No effect on UBE2N-binding. Gain of UBE2L3-binding." evidence="10">
    <original>M</original>
    <variation>V</variation>
    <location>
        <position position="103"/>
    </location>
</feature>
<feature type="mutagenesis site" description="No effect on UBE2N-binding. No gain of UBE2L3-binding; when associated with L-128." evidence="10">
    <original>D</original>
    <variation>L</variation>
    <location>
        <position position="127"/>
    </location>
</feature>
<feature type="mutagenesis site" description="No effect on UBE2N-binding. No gain of UBE2L3-binding." evidence="10">
    <original>D</original>
    <variation>L</variation>
    <location>
        <position position="128"/>
    </location>
</feature>
<feature type="mutagenesis site" description="Loss of phosphorylation and of 14-3-3-binding." evidence="8">
    <original>T</original>
    <variation>E</variation>
    <location>
        <position position="135"/>
    </location>
</feature>
<feature type="sequence conflict" description="In Ref. 3; BAF85736." evidence="15" ref="3">
    <original>D</original>
    <variation>G</variation>
    <location>
        <position position="124"/>
    </location>
</feature>
<dbReference type="EMBL" id="AB024703">
    <property type="protein sequence ID" value="BAA84683.1"/>
    <property type="molecule type" value="mRNA"/>
</dbReference>
<dbReference type="EMBL" id="AF151881">
    <property type="protein sequence ID" value="AAD34118.1"/>
    <property type="molecule type" value="mRNA"/>
</dbReference>
<dbReference type="EMBL" id="AK293047">
    <property type="protein sequence ID" value="BAF85736.1"/>
    <property type="molecule type" value="mRNA"/>
</dbReference>
<dbReference type="EMBL" id="AK313140">
    <property type="protein sequence ID" value="BAG35959.1"/>
    <property type="molecule type" value="mRNA"/>
</dbReference>
<dbReference type="EMBL" id="AL162430">
    <property type="status" value="NOT_ANNOTATED_CDS"/>
    <property type="molecule type" value="Genomic_DNA"/>
</dbReference>
<dbReference type="EMBL" id="CH471059">
    <property type="protein sequence ID" value="EAX06831.1"/>
    <property type="molecule type" value="Genomic_DNA"/>
</dbReference>
<dbReference type="EMBL" id="BC020964">
    <property type="protein sequence ID" value="AAH20964.1"/>
    <property type="molecule type" value="mRNA"/>
</dbReference>
<dbReference type="EMBL" id="BC047654">
    <property type="protein sequence ID" value="AAH47654.1"/>
    <property type="molecule type" value="mRNA"/>
</dbReference>
<dbReference type="CCDS" id="CCDS556.1"/>
<dbReference type="RefSeq" id="NP_055187.1">
    <property type="nucleotide sequence ID" value="NM_014372.5"/>
</dbReference>
<dbReference type="SMR" id="Q9Y3C5"/>
<dbReference type="BioGRID" id="117941">
    <property type="interactions" value="162"/>
</dbReference>
<dbReference type="CORUM" id="Q9Y3C5"/>
<dbReference type="FunCoup" id="Q9Y3C5">
    <property type="interactions" value="348"/>
</dbReference>
<dbReference type="IntAct" id="Q9Y3C5">
    <property type="interactions" value="276"/>
</dbReference>
<dbReference type="MINT" id="Q9Y3C5"/>
<dbReference type="STRING" id="9606.ENSP00000242719"/>
<dbReference type="GlyGen" id="Q9Y3C5">
    <property type="glycosylation" value="1 site"/>
</dbReference>
<dbReference type="iPTMnet" id="Q9Y3C5"/>
<dbReference type="PhosphoSitePlus" id="Q9Y3C5"/>
<dbReference type="SwissPalm" id="Q9Y3C5"/>
<dbReference type="BioMuta" id="RNF11"/>
<dbReference type="DMDM" id="21362884"/>
<dbReference type="jPOST" id="Q9Y3C5"/>
<dbReference type="MassIVE" id="Q9Y3C5"/>
<dbReference type="PaxDb" id="9606-ENSP00000242719"/>
<dbReference type="PeptideAtlas" id="Q9Y3C5"/>
<dbReference type="ProteomicsDB" id="86014"/>
<dbReference type="Pumba" id="Q9Y3C5"/>
<dbReference type="Antibodypedia" id="32937">
    <property type="antibodies" value="179 antibodies from 24 providers"/>
</dbReference>
<dbReference type="DNASU" id="26994"/>
<dbReference type="Ensembl" id="ENST00000242719.4">
    <property type="protein sequence ID" value="ENSP00000242719.3"/>
    <property type="gene ID" value="ENSG00000123091.5"/>
</dbReference>
<dbReference type="GeneID" id="26994"/>
<dbReference type="KEGG" id="hsa:26994"/>
<dbReference type="MANE-Select" id="ENST00000242719.4">
    <property type="protein sequence ID" value="ENSP00000242719.3"/>
    <property type="RefSeq nucleotide sequence ID" value="NM_014372.5"/>
    <property type="RefSeq protein sequence ID" value="NP_055187.1"/>
</dbReference>
<dbReference type="UCSC" id="uc001csi.5">
    <property type="organism name" value="human"/>
</dbReference>
<dbReference type="AGR" id="HGNC:10056"/>
<dbReference type="CTD" id="26994"/>
<dbReference type="DisGeNET" id="26994"/>
<dbReference type="GeneCards" id="RNF11"/>
<dbReference type="HGNC" id="HGNC:10056">
    <property type="gene designation" value="RNF11"/>
</dbReference>
<dbReference type="HPA" id="ENSG00000123091">
    <property type="expression patterns" value="Low tissue specificity"/>
</dbReference>
<dbReference type="MIM" id="612598">
    <property type="type" value="gene"/>
</dbReference>
<dbReference type="neXtProt" id="NX_Q9Y3C5"/>
<dbReference type="OpenTargets" id="ENSG00000123091"/>
<dbReference type="PharmGKB" id="PA34420"/>
<dbReference type="VEuPathDB" id="HostDB:ENSG00000123091"/>
<dbReference type="eggNOG" id="KOG0800">
    <property type="taxonomic scope" value="Eukaryota"/>
</dbReference>
<dbReference type="GeneTree" id="ENSGT00730000110988"/>
<dbReference type="HOGENOM" id="CLU_123539_1_0_1"/>
<dbReference type="InParanoid" id="Q9Y3C5"/>
<dbReference type="OMA" id="HLDCIDN"/>
<dbReference type="OrthoDB" id="9984778at2759"/>
<dbReference type="PAN-GO" id="Q9Y3C5">
    <property type="GO annotations" value="3 GO annotations based on evolutionary models"/>
</dbReference>
<dbReference type="PhylomeDB" id="Q9Y3C5"/>
<dbReference type="TreeFam" id="TF318022"/>
<dbReference type="PathwayCommons" id="Q9Y3C5"/>
<dbReference type="SignaLink" id="Q9Y3C5"/>
<dbReference type="SIGNOR" id="Q9Y3C5"/>
<dbReference type="BioGRID-ORCS" id="26994">
    <property type="hits" value="45 hits in 1199 CRISPR screens"/>
</dbReference>
<dbReference type="ChiTaRS" id="RNF11">
    <property type="organism name" value="human"/>
</dbReference>
<dbReference type="GeneWiki" id="RNF11"/>
<dbReference type="GenomeRNAi" id="26994"/>
<dbReference type="Pharos" id="Q9Y3C5">
    <property type="development level" value="Tbio"/>
</dbReference>
<dbReference type="PRO" id="PR:Q9Y3C5"/>
<dbReference type="Proteomes" id="UP000005640">
    <property type="component" value="Chromosome 1"/>
</dbReference>
<dbReference type="RNAct" id="Q9Y3C5">
    <property type="molecule type" value="protein"/>
</dbReference>
<dbReference type="Bgee" id="ENSG00000123091">
    <property type="expression patterns" value="Expressed in lateral nuclear group of thalamus and 213 other cell types or tissues"/>
</dbReference>
<dbReference type="GO" id="GO:0005769">
    <property type="term" value="C:early endosome"/>
    <property type="evidence" value="ECO:0007669"/>
    <property type="project" value="UniProtKB-SubCell"/>
</dbReference>
<dbReference type="GO" id="GO:0070062">
    <property type="term" value="C:extracellular exosome"/>
    <property type="evidence" value="ECO:0007005"/>
    <property type="project" value="UniProtKB"/>
</dbReference>
<dbReference type="GO" id="GO:0005634">
    <property type="term" value="C:nucleus"/>
    <property type="evidence" value="ECO:0007669"/>
    <property type="project" value="UniProtKB-SubCell"/>
</dbReference>
<dbReference type="GO" id="GO:0055037">
    <property type="term" value="C:recycling endosome"/>
    <property type="evidence" value="ECO:0007669"/>
    <property type="project" value="UniProtKB-SubCell"/>
</dbReference>
<dbReference type="GO" id="GO:0000151">
    <property type="term" value="C:ubiquitin ligase complex"/>
    <property type="evidence" value="ECO:0000314"/>
    <property type="project" value="UniProtKB"/>
</dbReference>
<dbReference type="GO" id="GO:0003677">
    <property type="term" value="F:DNA binding"/>
    <property type="evidence" value="ECO:0000304"/>
    <property type="project" value="ProtInc"/>
</dbReference>
<dbReference type="GO" id="GO:0061630">
    <property type="term" value="F:ubiquitin protein ligase activity"/>
    <property type="evidence" value="ECO:0000314"/>
    <property type="project" value="FlyBase"/>
</dbReference>
<dbReference type="GO" id="GO:0008270">
    <property type="term" value="F:zinc ion binding"/>
    <property type="evidence" value="ECO:0000304"/>
    <property type="project" value="ProtInc"/>
</dbReference>
<dbReference type="GO" id="GO:0051865">
    <property type="term" value="P:protein autoubiquitination"/>
    <property type="evidence" value="ECO:0000314"/>
    <property type="project" value="FlyBase"/>
</dbReference>
<dbReference type="GO" id="GO:0006511">
    <property type="term" value="P:ubiquitin-dependent protein catabolic process"/>
    <property type="evidence" value="ECO:0000314"/>
    <property type="project" value="UniProtKB"/>
</dbReference>
<dbReference type="CDD" id="cd16468">
    <property type="entry name" value="RING-H2_RNF11"/>
    <property type="match status" value="1"/>
</dbReference>
<dbReference type="FunFam" id="3.30.40.10:FF:000134">
    <property type="entry name" value="Ring finger protein 11"/>
    <property type="match status" value="1"/>
</dbReference>
<dbReference type="Gene3D" id="3.30.40.10">
    <property type="entry name" value="Zinc/RING finger domain, C3HC4 (zinc finger)"/>
    <property type="match status" value="1"/>
</dbReference>
<dbReference type="InterPro" id="IPR042981">
    <property type="entry name" value="RNF11_RING-H2"/>
</dbReference>
<dbReference type="InterPro" id="IPR052804">
    <property type="entry name" value="UEC_component"/>
</dbReference>
<dbReference type="InterPro" id="IPR001841">
    <property type="entry name" value="Znf_RING"/>
</dbReference>
<dbReference type="InterPro" id="IPR013083">
    <property type="entry name" value="Znf_RING/FYVE/PHD"/>
</dbReference>
<dbReference type="PANTHER" id="PTHR46359">
    <property type="entry name" value="GEO07743P1"/>
    <property type="match status" value="1"/>
</dbReference>
<dbReference type="PANTHER" id="PTHR46359:SF1">
    <property type="entry name" value="RING FINGER PROTEIN 11"/>
    <property type="match status" value="1"/>
</dbReference>
<dbReference type="Pfam" id="PF13639">
    <property type="entry name" value="zf-RING_2"/>
    <property type="match status" value="1"/>
</dbReference>
<dbReference type="SMART" id="SM00184">
    <property type="entry name" value="RING"/>
    <property type="match status" value="1"/>
</dbReference>
<dbReference type="SUPFAM" id="SSF57850">
    <property type="entry name" value="RING/U-box"/>
    <property type="match status" value="1"/>
</dbReference>
<dbReference type="PROSITE" id="PS50089">
    <property type="entry name" value="ZF_RING_2"/>
    <property type="match status" value="1"/>
</dbReference>
<gene>
    <name type="primary">RNF11</name>
    <name type="ORF">CGI-123</name>
</gene>
<keyword id="KW-0963">Cytoplasm</keyword>
<keyword id="KW-0903">Direct protein sequencing</keyword>
<keyword id="KW-0967">Endosome</keyword>
<keyword id="KW-0449">Lipoprotein</keyword>
<keyword id="KW-0479">Metal-binding</keyword>
<keyword id="KW-0519">Myristate</keyword>
<keyword id="KW-0539">Nucleus</keyword>
<keyword id="KW-0564">Palmitate</keyword>
<keyword id="KW-0597">Phosphoprotein</keyword>
<keyword id="KW-1267">Proteomics identification</keyword>
<keyword id="KW-1185">Reference proteome</keyword>
<keyword id="KW-0832">Ubl conjugation</keyword>
<keyword id="KW-0833">Ubl conjugation pathway</keyword>
<keyword id="KW-0862">Zinc</keyword>
<keyword id="KW-0863">Zinc-finger</keyword>
<proteinExistence type="evidence at protein level"/>
<protein>
    <recommendedName>
        <fullName>RING finger protein 11</fullName>
    </recommendedName>
</protein>
<name>RNF11_HUMAN</name>
<comment type="function">
    <text evidence="7">Essential component of a ubiquitin-editing protein complex, comprising also TNFAIP3, ITCH and TAX1BP1, that ensures the transient nature of inflammatory signaling pathways. Promotes the association of TNFAIP3 to RIPK1 after TNF stimulation. TNFAIP3 deubiquitinates 'Lys-63' polyubiquitin chains on RIPK1 and catalyzes the formation of 'Lys-48'-polyubiquitin chains. This leads to RIPK1 proteasomal degradation and consequently termination of the TNF- or LPS-mediated activation of NF-kappa-B. Recruits STAMBP to the E3 ubiquitin-ligase SMURF2 for ubiquitination, leading to its degradation by the 26S proteasome.</text>
</comment>
<comment type="subunit">
    <text evidence="1 5 6 7 8 10 11 12 14">Interacts (when phosphorylated) with 14-3-3. Interacts with the E3 ubiquitin-ligases NEDD4, ITCH, SMURF2 and WWP1 (By similarity). Also interacts with the E2 ubiquitin-conjugating enzymes UBE2D1 and UBE2N, but neither with CDC34, nor with UBE2L3. Interacts with ZNF350, EPS15 and STAMBP. After TNF stimulation, interacts with TAX1BP1, TNFAIP3 and RIPK1; these interactions are transient and they are lost after 1 hour of stimulation with TNF (By similarity). Interacts with GGA1.</text>
</comment>
<comment type="interaction">
    <interactant intactId="EBI-396669">
        <id>Q9Y3C5</id>
    </interactant>
    <interactant intactId="EBI-10173507">
        <id>Q6UY14-3</id>
        <label>ADAMTSL4</label>
    </interactant>
    <organismsDiffer>false</organismsDiffer>
    <experiments>3</experiments>
</comment>
<comment type="interaction">
    <interactant intactId="EBI-396669">
        <id>Q9Y3C5</id>
    </interactant>
    <interactant intactId="EBI-25840993">
        <id>Q6ZTN6-2</id>
        <label>ANKRD13D</label>
    </interactant>
    <organismsDiffer>false</organismsDiffer>
    <experiments>3</experiments>
</comment>
<comment type="interaction">
    <interactant intactId="EBI-396669">
        <id>Q9Y3C5</id>
    </interactant>
    <interactant intactId="EBI-21636328">
        <id>Q8N8A2-2</id>
        <label>ANKRD44</label>
    </interactant>
    <organismsDiffer>false</organismsDiffer>
    <experiments>3</experiments>
</comment>
<comment type="interaction">
    <interactant intactId="EBI-396669">
        <id>Q9Y3C5</id>
    </interactant>
    <interactant intactId="EBI-25880850">
        <id>Q86WR3</id>
        <label>ANUBL1</label>
    </interactant>
    <organismsDiffer>false</organismsDiffer>
    <experiments>3</experiments>
</comment>
<comment type="interaction">
    <interactant intactId="EBI-396669">
        <id>Q9Y3C5</id>
    </interactant>
    <interactant intactId="EBI-2556915">
        <id>P13928</id>
        <label>ANXA8</label>
    </interactant>
    <organismsDiffer>false</organismsDiffer>
    <experiments>3</experiments>
</comment>
<comment type="interaction">
    <interactant intactId="EBI-396669">
        <id>Q9Y3C5</id>
    </interactant>
    <interactant intactId="EBI-77613">
        <id>P05067</id>
        <label>APP</label>
    </interactant>
    <organismsDiffer>false</organismsDiffer>
    <experiments>3</experiments>
</comment>
<comment type="interaction">
    <interactant intactId="EBI-396669">
        <id>Q9Y3C5</id>
    </interactant>
    <interactant intactId="EBI-19124986">
        <id>O94778</id>
        <label>AQP8</label>
    </interactant>
    <organismsDiffer>false</organismsDiffer>
    <experiments>3</experiments>
</comment>
<comment type="interaction">
    <interactant intactId="EBI-396669">
        <id>Q9Y3C5</id>
    </interactant>
    <interactant intactId="EBI-2875816">
        <id>Q9NP61</id>
        <label>ARFGAP3</label>
    </interactant>
    <organismsDiffer>false</organismsDiffer>
    <experiments>3</experiments>
</comment>
<comment type="interaction">
    <interactant intactId="EBI-396669">
        <id>Q9Y3C5</id>
    </interactant>
    <interactant intactId="EBI-25844820">
        <id>Q86TN1</id>
        <label>ARNT2</label>
    </interactant>
    <organismsDiffer>false</organismsDiffer>
    <experiments>3</experiments>
</comment>
<comment type="interaction">
    <interactant intactId="EBI-396669">
        <id>Q9Y3C5</id>
    </interactant>
    <interactant intactId="EBI-707573">
        <id>Q8WXK3</id>
        <label>ASB13</label>
    </interactant>
    <organismsDiffer>false</organismsDiffer>
    <experiments>3</experiments>
</comment>
<comment type="interaction">
    <interactant intactId="EBI-396669">
        <id>Q9Y3C5</id>
    </interactant>
    <interactant intactId="EBI-14199987">
        <id>Q9Y575-3</id>
        <label>ASB3</label>
    </interactant>
    <organismsDiffer>false</organismsDiffer>
    <experiments>3</experiments>
</comment>
<comment type="interaction">
    <interactant intactId="EBI-396669">
        <id>Q9Y3C5</id>
    </interactant>
    <interactant intactId="EBI-10254793">
        <id>Q6XD76</id>
        <label>ASCL4</label>
    </interactant>
    <organismsDiffer>false</organismsDiffer>
    <experiments>3</experiments>
</comment>
<comment type="interaction">
    <interactant intactId="EBI-396669">
        <id>Q9Y3C5</id>
    </interactant>
    <interactant intactId="EBI-9089489">
        <id>Q96FT7-4</id>
        <label>ASIC4</label>
    </interactant>
    <organismsDiffer>false</organismsDiffer>
    <experiments>3</experiments>
</comment>
<comment type="interaction">
    <interactant intactId="EBI-396669">
        <id>Q9Y3C5</id>
    </interactant>
    <interactant intactId="EBI-1048913">
        <id>Q9H0Y0</id>
        <label>ATG10</label>
    </interactant>
    <organismsDiffer>false</organismsDiffer>
    <experiments>3</experiments>
</comment>
<comment type="interaction">
    <interactant intactId="EBI-396669">
        <id>Q9Y3C5</id>
    </interactant>
    <interactant intactId="EBI-2891281">
        <id>P15313</id>
        <label>ATP6V1B1</label>
    </interactant>
    <organismsDiffer>false</organismsDiffer>
    <experiments>3</experiments>
</comment>
<comment type="interaction">
    <interactant intactId="EBI-396669">
        <id>Q9Y3C5</id>
    </interactant>
    <interactant intactId="EBI-4290814">
        <id>P21281</id>
        <label>ATP6V1B2</label>
    </interactant>
    <organismsDiffer>false</organismsDiffer>
    <experiments>3</experiments>
</comment>
<comment type="interaction">
    <interactant intactId="EBI-396669">
        <id>Q9Y3C5</id>
    </interactant>
    <interactant intactId="EBI-10988864">
        <id>P46379-2</id>
        <label>BAG6</label>
    </interactant>
    <organismsDiffer>false</organismsDiffer>
    <experiments>3</experiments>
</comment>
<comment type="interaction">
    <interactant intactId="EBI-396669">
        <id>Q9Y3C5</id>
    </interactant>
    <interactant intactId="EBI-519866">
        <id>Q16611</id>
        <label>BAK1</label>
    </interactant>
    <organismsDiffer>false</organismsDiffer>
    <experiments>3</experiments>
</comment>
<comment type="interaction">
    <interactant intactId="EBI-396669">
        <id>Q9Y3C5</id>
    </interactant>
    <interactant intactId="EBI-4280811">
        <id>Q8IXM2</id>
        <label>BAP18</label>
    </interactant>
    <organismsDiffer>false</organismsDiffer>
    <experiments>3</experiments>
</comment>
<comment type="interaction">
    <interactant intactId="EBI-396669">
        <id>Q9Y3C5</id>
    </interactant>
    <interactant intactId="EBI-949378">
        <id>Q14457</id>
        <label>BECN1</label>
    </interactant>
    <organismsDiffer>false</organismsDiffer>
    <experiments>3</experiments>
</comment>
<comment type="interaction">
    <interactant intactId="EBI-396669">
        <id>Q9Y3C5</id>
    </interactant>
    <interactant intactId="EBI-2837444">
        <id>Q8WUW1</id>
        <label>BRK1</label>
    </interactant>
    <organismsDiffer>false</organismsDiffer>
    <experiments>3</experiments>
</comment>
<comment type="interaction">
    <interactant intactId="EBI-396669">
        <id>Q9Y3C5</id>
    </interactant>
    <interactant intactId="EBI-10693038">
        <id>Q9NSI6-4</id>
        <label>BRWD1</label>
    </interactant>
    <organismsDiffer>false</organismsDiffer>
    <experiments>3</experiments>
</comment>
<comment type="interaction">
    <interactant intactId="EBI-396669">
        <id>Q9Y3C5</id>
    </interactant>
    <interactant intactId="EBI-7996695">
        <id>Q8WZ55</id>
        <label>BSND</label>
    </interactant>
    <organismsDiffer>false</organismsDiffer>
    <experiments>3</experiments>
</comment>
<comment type="interaction">
    <interactant intactId="EBI-396669">
        <id>Q9Y3C5</id>
    </interactant>
    <interactant intactId="EBI-751596">
        <id>Q96LL4</id>
        <label>C8orf48</label>
    </interactant>
    <organismsDiffer>false</organismsDiffer>
    <experiments>3</experiments>
</comment>
<comment type="interaction">
    <interactant intactId="EBI-396669">
        <id>Q9Y3C5</id>
    </interactant>
    <interactant intactId="EBI-25850646">
        <id>Q8N5S9-2</id>
        <label>CAMKK1</label>
    </interactant>
    <organismsDiffer>false</organismsDiffer>
    <experiments>3</experiments>
</comment>
<comment type="interaction">
    <interactant intactId="EBI-396669">
        <id>Q9Y3C5</id>
    </interactant>
    <interactant intactId="EBI-12823145">
        <id>Q96DZ5</id>
        <label>CLIP3</label>
    </interactant>
    <organismsDiffer>false</organismsDiffer>
    <experiments>3</experiments>
</comment>
<comment type="interaction">
    <interactant intactId="EBI-396669">
        <id>Q9Y3C5</id>
    </interactant>
    <interactant intactId="EBI-2835965">
        <id>Q9BT09</id>
        <label>CNPY3</label>
    </interactant>
    <organismsDiffer>false</organismsDiffer>
    <experiments>3</experiments>
</comment>
<comment type="interaction">
    <interactant intactId="EBI-396669">
        <id>Q9Y3C5</id>
    </interactant>
    <interactant intactId="EBI-25836090">
        <id>Q6PJW8-3</id>
        <label>CNST</label>
    </interactant>
    <organismsDiffer>false</organismsDiffer>
    <experiments>3</experiments>
</comment>
<comment type="interaction">
    <interactant intactId="EBI-396669">
        <id>Q9Y3C5</id>
    </interactant>
    <interactant intactId="EBI-350590">
        <id>Q9UNS2</id>
        <label>COPS3</label>
    </interactant>
    <organismsDiffer>false</organismsDiffer>
    <experiments>3</experiments>
</comment>
<comment type="interaction">
    <interactant intactId="EBI-396669">
        <id>Q9Y3C5</id>
    </interactant>
    <interactant intactId="EBI-724303">
        <id>P01040</id>
        <label>CSTA</label>
    </interactant>
    <organismsDiffer>false</organismsDiffer>
    <experiments>3</experiments>
</comment>
<comment type="interaction">
    <interactant intactId="EBI-396669">
        <id>Q9Y3C5</id>
    </interactant>
    <interactant intactId="EBI-12024320">
        <id>Q8TB03</id>
        <label>CXorf38</label>
    </interactant>
    <organismsDiffer>false</organismsDiffer>
    <experiments>3</experiments>
</comment>
<comment type="interaction">
    <interactant intactId="EBI-396669">
        <id>Q9Y3C5</id>
    </interactant>
    <interactant intactId="EBI-1047284">
        <id>P00167</id>
        <label>CYB5A</label>
    </interactant>
    <organismsDiffer>false</organismsDiffer>
    <experiments>3</experiments>
</comment>
<comment type="interaction">
    <interactant intactId="EBI-396669">
        <id>Q9Y3C5</id>
    </interactant>
    <interactant intactId="EBI-25842815">
        <id>Q5TAQ9-2</id>
        <label>DCAF8</label>
    </interactant>
    <organismsDiffer>false</organismsDiffer>
    <experiments>3</experiments>
</comment>
<comment type="interaction">
    <interactant intactId="EBI-396669">
        <id>Q9Y3C5</id>
    </interactant>
    <interactant intactId="EBI-25842538">
        <id>Q8NDP9</id>
        <label>DKFZp547K2416</label>
    </interactant>
    <organismsDiffer>false</organismsDiffer>
    <experiments>3</experiments>
</comment>
<comment type="interaction">
    <interactant intactId="EBI-396669">
        <id>Q9Y3C5</id>
    </interactant>
    <interactant intactId="EBI-3939812">
        <id>Q5VZB9</id>
        <label>DMRTA1</label>
    </interactant>
    <organismsDiffer>false</organismsDiffer>
    <experiments>3</experiments>
</comment>
<comment type="interaction">
    <interactant intactId="EBI-396669">
        <id>Q9Y3C5</id>
    </interactant>
    <interactant intactId="EBI-10694655">
        <id>Q7L591-3</id>
        <label>DOK3</label>
    </interactant>
    <organismsDiffer>false</organismsDiffer>
    <experiments>3</experiments>
</comment>
<comment type="interaction">
    <interactant intactId="EBI-396669">
        <id>Q9Y3C5</id>
    </interactant>
    <interactant intactId="EBI-724653">
        <id>Q9BPU6</id>
        <label>DPYSL5</label>
    </interactant>
    <organismsDiffer>false</organismsDiffer>
    <experiments>3</experiments>
</comment>
<comment type="interaction">
    <interactant intactId="EBI-396669">
        <id>Q9Y3C5</id>
    </interactant>
    <interactant intactId="EBI-372173">
        <id>O77932</id>
        <label>DXO</label>
    </interactant>
    <organismsDiffer>false</organismsDiffer>
    <experiments>3</experiments>
</comment>
<comment type="interaction">
    <interactant intactId="EBI-396669">
        <id>Q9Y3C5</id>
    </interactant>
    <interactant intactId="EBI-11132357">
        <id>O75530-2</id>
        <label>EED</label>
    </interactant>
    <organismsDiffer>false</organismsDiffer>
    <experiments>3</experiments>
</comment>
<comment type="interaction">
    <interactant intactId="EBI-396669">
        <id>Q9Y3C5</id>
    </interactant>
    <interactant intactId="EBI-12866582">
        <id>I6L9I8</id>
        <label>EPN3</label>
    </interactant>
    <organismsDiffer>false</organismsDiffer>
    <experiments>3</experiments>
</comment>
<comment type="interaction">
    <interactant intactId="EBI-396669">
        <id>Q9Y3C5</id>
    </interactant>
    <interactant intactId="EBI-12260294">
        <id>Q9NQ30</id>
        <label>ESM1</label>
    </interactant>
    <organismsDiffer>false</organismsDiffer>
    <experiments>3</experiments>
</comment>
<comment type="interaction">
    <interactant intactId="EBI-396669">
        <id>Q9Y3C5</id>
    </interactant>
    <interactant intactId="EBI-10213520">
        <id>Q6NXG1</id>
        <label>ESRP1</label>
    </interactant>
    <organismsDiffer>false</organismsDiffer>
    <experiments>3</experiments>
</comment>
<comment type="interaction">
    <interactant intactId="EBI-396669">
        <id>Q9Y3C5</id>
    </interactant>
    <interactant intactId="EBI-9089567">
        <id>Q99504</id>
        <label>EYA3</label>
    </interactant>
    <organismsDiffer>false</organismsDiffer>
    <experiments>3</experiments>
</comment>
<comment type="interaction">
    <interactant intactId="EBI-396669">
        <id>Q9Y3C5</id>
    </interactant>
    <interactant intactId="EBI-10697159">
        <id>O15540</id>
        <label>FABP7</label>
    </interactant>
    <organismsDiffer>false</organismsDiffer>
    <experiments>3</experiments>
</comment>
<comment type="interaction">
    <interactant intactId="EBI-396669">
        <id>Q9Y3C5</id>
    </interactant>
    <interactant intactId="EBI-12902289">
        <id>Q6P587-2</id>
        <label>FAHD1</label>
    </interactant>
    <organismsDiffer>false</organismsDiffer>
    <experiments>3</experiments>
</comment>
<comment type="interaction">
    <interactant intactId="EBI-396669">
        <id>Q9Y3C5</id>
    </interactant>
    <interactant intactId="EBI-3893327">
        <id>Q6P1L5</id>
        <label>FAM117B</label>
    </interactant>
    <organismsDiffer>false</organismsDiffer>
    <experiments>3</experiments>
</comment>
<comment type="interaction">
    <interactant intactId="EBI-396669">
        <id>Q9Y3C5</id>
    </interactant>
    <interactant intactId="EBI-11793142">
        <id>Q96GL9</id>
        <label>FAM163A</label>
    </interactant>
    <organismsDiffer>false</organismsDiffer>
    <experiments>3</experiments>
</comment>
<comment type="interaction">
    <interactant intactId="EBI-396669">
        <id>Q9Y3C5</id>
    </interactant>
    <interactant intactId="EBI-5461838">
        <id>Q17RN3</id>
        <label>FAM98C</label>
    </interactant>
    <organismsDiffer>false</organismsDiffer>
    <experiments>3</experiments>
</comment>
<comment type="interaction">
    <interactant intactId="EBI-396669">
        <id>Q9Y3C5</id>
    </interactant>
    <interactant intactId="EBI-2339898">
        <id>Q9NW38</id>
        <label>FANCL</label>
    </interactant>
    <organismsDiffer>false</organismsDiffer>
    <experiments>3</experiments>
</comment>
<comment type="interaction">
    <interactant intactId="EBI-396669">
        <id>Q9Y3C5</id>
    </interactant>
    <interactant intactId="EBI-744510">
        <id>P15407</id>
        <label>FOSL1</label>
    </interactant>
    <organismsDiffer>false</organismsDiffer>
    <experiments>3</experiments>
</comment>
<comment type="interaction">
    <interactant intactId="EBI-396669">
        <id>Q9Y3C5</id>
    </interactant>
    <interactant intactId="EBI-3906612">
        <id>P35575</id>
        <label>G6PC1</label>
    </interactant>
    <organismsDiffer>false</organismsDiffer>
    <experiments>3</experiments>
</comment>
<comment type="interaction">
    <interactant intactId="EBI-396669">
        <id>Q9Y3C5</id>
    </interactant>
    <interactant intactId="EBI-9090198">
        <id>P15976-2</id>
        <label>GATA1</label>
    </interactant>
    <organismsDiffer>false</organismsDiffer>
    <experiments>3</experiments>
</comment>
<comment type="interaction">
    <interactant intactId="EBI-396669">
        <id>Q9Y3C5</id>
    </interactant>
    <interactant intactId="EBI-21856389">
        <id>P23769-2</id>
        <label>GATA2</label>
    </interactant>
    <organismsDiffer>false</organismsDiffer>
    <experiments>3</experiments>
</comment>
<comment type="interaction">
    <interactant intactId="EBI-396669">
        <id>Q9Y3C5</id>
    </interactant>
    <interactant intactId="EBI-8799578">
        <id>Q9NXC2</id>
        <label>GFOD1</label>
    </interactant>
    <organismsDiffer>false</organismsDiffer>
    <experiments>3</experiments>
</comment>
<comment type="interaction">
    <interactant intactId="EBI-396669">
        <id>Q9Y3C5</id>
    </interactant>
    <interactant intactId="EBI-447141">
        <id>Q9UJY5</id>
        <label>GGA1</label>
    </interactant>
    <organismsDiffer>false</organismsDiffer>
    <experiments>7</experiments>
</comment>
<comment type="interaction">
    <interactant intactId="EBI-396669">
        <id>Q9Y3C5</id>
    </interactant>
    <interactant intactId="EBI-356942">
        <id>P62879</id>
        <label>GNB2</label>
    </interactant>
    <organismsDiffer>false</organismsDiffer>
    <experiments>3</experiments>
</comment>
<comment type="interaction">
    <interactant intactId="EBI-396669">
        <id>Q9Y3C5</id>
    </interactant>
    <interactant intactId="EBI-22000587">
        <id>Q9HBQ8</id>
        <label>GOLGA2P5</label>
    </interactant>
    <organismsDiffer>false</organismsDiffer>
    <experiments>3</experiments>
</comment>
<comment type="interaction">
    <interactant intactId="EBI-396669">
        <id>Q9Y3C5</id>
    </interactant>
    <interactant intactId="EBI-751540">
        <id>O95872</id>
        <label>GPANK1</label>
    </interactant>
    <organismsDiffer>false</organismsDiffer>
    <experiments>3</experiments>
</comment>
<comment type="interaction">
    <interactant intactId="EBI-396669">
        <id>Q9Y3C5</id>
    </interactant>
    <interactant intactId="EBI-21649723">
        <id>Q7Z602</id>
        <label>GPR141</label>
    </interactant>
    <organismsDiffer>false</organismsDiffer>
    <experiments>3</experiments>
</comment>
<comment type="interaction">
    <interactant intactId="EBI-396669">
        <id>Q9Y3C5</id>
    </interactant>
    <interactant intactId="EBI-347538">
        <id>Q9Y4H4</id>
        <label>GPSM3</label>
    </interactant>
    <organismsDiffer>false</organismsDiffer>
    <experiments>3</experiments>
</comment>
<comment type="interaction">
    <interactant intactId="EBI-396669">
        <id>Q9Y3C5</id>
    </interactant>
    <interactant intactId="EBI-2868501">
        <id>Q6NXT2</id>
        <label>H3-5</label>
    </interactant>
    <organismsDiffer>false</organismsDiffer>
    <experiments>3</experiments>
</comment>
<comment type="interaction">
    <interactant intactId="EBI-396669">
        <id>Q9Y3C5</id>
    </interactant>
    <interactant intactId="EBI-79722">
        <id>P68431</id>
        <label>H3C12</label>
    </interactant>
    <organismsDiffer>false</organismsDiffer>
    <experiments>3</experiments>
</comment>
<comment type="interaction">
    <interactant intactId="EBI-396669">
        <id>Q9Y3C5</id>
    </interactant>
    <interactant intactId="EBI-2965780">
        <id>P52790</id>
        <label>HK3</label>
    </interactant>
    <organismsDiffer>false</organismsDiffer>
    <experiments>3</experiments>
</comment>
<comment type="interaction">
    <interactant intactId="EBI-396669">
        <id>Q9Y3C5</id>
    </interactant>
    <interactant intactId="EBI-3923226">
        <id>P09017</id>
        <label>HOXC4</label>
    </interactant>
    <organismsDiffer>false</organismsDiffer>
    <experiments>3</experiments>
</comment>
<comment type="interaction">
    <interactant intactId="EBI-396669">
        <id>Q9Y3C5</id>
    </interactant>
    <interactant intactId="EBI-17178971">
        <id>Q14005-2</id>
        <label>IL16</label>
    </interactant>
    <organismsDiffer>false</organismsDiffer>
    <experiments>3</experiments>
</comment>
<comment type="interaction">
    <interactant intactId="EBI-396669">
        <id>Q9Y3C5</id>
    </interactant>
    <interactant intactId="EBI-743980">
        <id>Q9NXX0</id>
        <label>ILF3</label>
    </interactant>
    <organismsDiffer>false</organismsDiffer>
    <experiments>3</experiments>
</comment>
<comment type="interaction">
    <interactant intactId="EBI-396669">
        <id>Q9Y3C5</id>
    </interactant>
    <interactant intactId="EBI-2866661">
        <id>Q9UNL4</id>
        <label>ING4</label>
    </interactant>
    <organismsDiffer>false</organismsDiffer>
    <experiments>3</experiments>
</comment>
<comment type="interaction">
    <interactant intactId="EBI-396669">
        <id>Q9Y3C5</id>
    </interactant>
    <interactant intactId="EBI-10238842">
        <id>Q8IXL9</id>
        <label>IQCF2</label>
    </interactant>
    <organismsDiffer>false</organismsDiffer>
    <experiments>3</experiments>
</comment>
<comment type="interaction">
    <interactant intactId="EBI-396669">
        <id>Q9Y3C5</id>
    </interactant>
    <interactant intactId="EBI-10220600">
        <id>Q8NA54</id>
        <label>IQUB</label>
    </interactant>
    <organismsDiffer>false</organismsDiffer>
    <experiments>3</experiments>
</comment>
<comment type="interaction">
    <interactant intactId="EBI-396669">
        <id>Q9Y3C5</id>
    </interactant>
    <interactant intactId="EBI-1564678">
        <id>Q96J02</id>
        <label>ITCH</label>
    </interactant>
    <organismsDiffer>false</organismsDiffer>
    <experiments>2</experiments>
</comment>
<comment type="interaction">
    <interactant intactId="EBI-396669">
        <id>Q9Y3C5</id>
    </interactant>
    <interactant intactId="EBI-25871195">
        <id>Q9NVX7-2</id>
        <label>KBTBD4</label>
    </interactant>
    <organismsDiffer>false</organismsDiffer>
    <experiments>3</experiments>
</comment>
<comment type="interaction">
    <interactant intactId="EBI-396669">
        <id>Q9Y3C5</id>
    </interactant>
    <interactant intactId="EBI-742916">
        <id>Q8WZ19</id>
        <label>KCTD13</label>
    </interactant>
    <organismsDiffer>false</organismsDiffer>
    <experiments>3</experiments>
</comment>
<comment type="interaction">
    <interactant intactId="EBI-396669">
        <id>Q9Y3C5</id>
    </interactant>
    <interactant intactId="EBI-2796400">
        <id>Q9UIH9</id>
        <label>KLF15</label>
    </interactant>
    <organismsDiffer>false</organismsDiffer>
    <experiments>3</experiments>
</comment>
<comment type="interaction">
    <interactant intactId="EBI-396669">
        <id>Q9Y3C5</id>
    </interactant>
    <interactant intactId="EBI-714379">
        <id>Q9Y2M5</id>
        <label>KLHL20</label>
    </interactant>
    <organismsDiffer>false</organismsDiffer>
    <experiments>3</experiments>
</comment>
<comment type="interaction">
    <interactant intactId="EBI-396669">
        <id>Q9Y3C5</id>
    </interactant>
    <interactant intactId="EBI-1049638">
        <id>Q14525</id>
        <label>KRT33B</label>
    </interactant>
    <organismsDiffer>false</organismsDiffer>
    <experiments>3</experiments>
</comment>
<comment type="interaction">
    <interactant intactId="EBI-396669">
        <id>Q9Y3C5</id>
    </interactant>
    <interactant intactId="EBI-10241353">
        <id>Q3SYF9</id>
        <label>KRTAP19-7</label>
    </interactant>
    <organismsDiffer>false</organismsDiffer>
    <experiments>3</experiments>
</comment>
<comment type="interaction">
    <interactant intactId="EBI-396669">
        <id>Q9Y3C5</id>
    </interactant>
    <interactant intactId="EBI-10261141">
        <id>Q8IUC2</id>
        <label>KRTAP8-1</label>
    </interactant>
    <organismsDiffer>false</organismsDiffer>
    <experiments>3</experiments>
</comment>
<comment type="interaction">
    <interactant intactId="EBI-396669">
        <id>Q9Y3C5</id>
    </interactant>
    <interactant intactId="EBI-9088686">
        <id>Q14847-2</id>
        <label>LASP1</label>
    </interactant>
    <organismsDiffer>false</organismsDiffer>
    <experiments>3</experiments>
</comment>
<comment type="interaction">
    <interactant intactId="EBI-396669">
        <id>Q9Y3C5</id>
    </interactant>
    <interactant intactId="EBI-10245913">
        <id>Q5T7P3</id>
        <label>LCE1B</label>
    </interactant>
    <organismsDiffer>false</organismsDiffer>
    <experiments>3</experiments>
</comment>
<comment type="interaction">
    <interactant intactId="EBI-396669">
        <id>Q9Y3C5</id>
    </interactant>
    <interactant intactId="EBI-10258746">
        <id>Q9UPM6</id>
        <label>LHX6</label>
    </interactant>
    <organismsDiffer>false</organismsDiffer>
    <experiments>3</experiments>
</comment>
<comment type="interaction">
    <interactant intactId="EBI-396669">
        <id>Q9Y3C5</id>
    </interactant>
    <interactant intactId="EBI-8474075">
        <id>Q68G74</id>
        <label>LHX8</label>
    </interactant>
    <organismsDiffer>false</organismsDiffer>
    <experiments>3</experiments>
</comment>
<comment type="interaction">
    <interactant intactId="EBI-396669">
        <id>Q9Y3C5</id>
    </interactant>
    <interactant intactId="EBI-739832">
        <id>Q8TBB1</id>
        <label>LNX1</label>
    </interactant>
    <organismsDiffer>false</organismsDiffer>
    <experiments>3</experiments>
</comment>
<comment type="interaction">
    <interactant intactId="EBI-396669">
        <id>Q9Y3C5</id>
    </interactant>
    <interactant intactId="EBI-9088215">
        <id>A2RU56</id>
        <label>LOC401296</label>
    </interactant>
    <organismsDiffer>false</organismsDiffer>
    <experiments>3</experiments>
</comment>
<comment type="interaction">
    <interactant intactId="EBI-396669">
        <id>Q9Y3C5</id>
    </interactant>
    <interactant intactId="EBI-749562">
        <id>Q96JB6</id>
        <label>LOXL4</label>
    </interactant>
    <organismsDiffer>false</organismsDiffer>
    <experiments>3</experiments>
</comment>
<comment type="interaction">
    <interactant intactId="EBI-396669">
        <id>Q9Y3C5</id>
    </interactant>
    <interactant intactId="EBI-5278370">
        <id>Q14693</id>
        <label>LPIN1</label>
    </interactant>
    <organismsDiffer>false</organismsDiffer>
    <experiments>3</experiments>
</comment>
<comment type="interaction">
    <interactant intactId="EBI-396669">
        <id>Q9Y3C5</id>
    </interactant>
    <interactant intactId="EBI-25848049">
        <id>P61244-4</id>
        <label>MAX</label>
    </interactant>
    <organismsDiffer>false</organismsDiffer>
    <experiments>3</experiments>
</comment>
<comment type="interaction">
    <interactant intactId="EBI-396669">
        <id>Q9Y3C5</id>
    </interactant>
    <interactant intactId="EBI-23820194">
        <id>Q03112-9</id>
        <label>MECOM</label>
    </interactant>
    <organismsDiffer>false</organismsDiffer>
    <experiments>3</experiments>
</comment>
<comment type="interaction">
    <interactant intactId="EBI-396669">
        <id>Q9Y3C5</id>
    </interactant>
    <interactant intactId="EBI-8487781">
        <id>Q8N6F8</id>
        <label>METTL27</label>
    </interactant>
    <organismsDiffer>false</organismsDiffer>
    <experiments>3</experiments>
</comment>
<comment type="interaction">
    <interactant intactId="EBI-396669">
        <id>Q9Y3C5</id>
    </interactant>
    <interactant intactId="EBI-8475277">
        <id>Q15049</id>
        <label>MLC1</label>
    </interactant>
    <organismsDiffer>false</organismsDiffer>
    <experiments>3</experiments>
</comment>
<comment type="interaction">
    <interactant intactId="EBI-396669">
        <id>Q9Y3C5</id>
    </interactant>
    <interactant intactId="EBI-716139">
        <id>P51948</id>
        <label>MNAT1</label>
    </interactant>
    <organismsDiffer>false</organismsDiffer>
    <experiments>3</experiments>
</comment>
<comment type="interaction">
    <interactant intactId="EBI-396669">
        <id>Q9Y3C5</id>
    </interactant>
    <interactant intactId="EBI-2512452">
        <id>Q8N594</id>
        <label>MPND</label>
    </interactant>
    <organismsDiffer>false</organismsDiffer>
    <experiments>3</experiments>
</comment>
<comment type="interaction">
    <interactant intactId="EBI-396669">
        <id>Q9Y3C5</id>
    </interactant>
    <interactant intactId="EBI-10699187">
        <id>Q8IXL7-2</id>
        <label>MSRB3</label>
    </interactant>
    <organismsDiffer>false</organismsDiffer>
    <experiments>3</experiments>
</comment>
<comment type="interaction">
    <interactant intactId="EBI-396669">
        <id>Q9Y3C5</id>
    </interactant>
    <interactant intactId="EBI-726944">
        <id>P46934</id>
        <label>NEDD4</label>
    </interactant>
    <organismsDiffer>false</organismsDiffer>
    <experiments>7</experiments>
</comment>
<comment type="interaction">
    <interactant intactId="EBI-396669">
        <id>Q9Y3C5</id>
    </interactant>
    <interactant intactId="EBI-718372">
        <id>Q8N5V2</id>
        <label>NGEF</label>
    </interactant>
    <organismsDiffer>false</organismsDiffer>
    <experiments>3</experiments>
</comment>
<comment type="interaction">
    <interactant intactId="EBI-396669">
        <id>Q9Y3C5</id>
    </interactant>
    <interactant intactId="EBI-10697320">
        <id>Q8NBF2-2</id>
        <label>NHLRC2</label>
    </interactant>
    <organismsDiffer>false</organismsDiffer>
    <experiments>3</experiments>
</comment>
<comment type="interaction">
    <interactant intactId="EBI-396669">
        <id>Q9Y3C5</id>
    </interactant>
    <interactant intactId="EBI-6144053">
        <id>Q14995</id>
        <label>NR1D2</label>
    </interactant>
    <organismsDiffer>false</organismsDiffer>
    <experiments>3</experiments>
</comment>
<comment type="interaction">
    <interactant intactId="EBI-396669">
        <id>Q9Y3C5</id>
    </interactant>
    <interactant intactId="EBI-25842707">
        <id>Q6X4W1-6</id>
        <label>NSMF</label>
    </interactant>
    <organismsDiffer>false</organismsDiffer>
    <experiments>3</experiments>
</comment>
<comment type="interaction">
    <interactant intactId="EBI-396669">
        <id>Q9Y3C5</id>
    </interactant>
    <interactant intactId="EBI-25834643">
        <id>P36639-4</id>
        <label>NUDT1</label>
    </interactant>
    <organismsDiffer>false</organismsDiffer>
    <experiments>3</experiments>
</comment>
<comment type="interaction">
    <interactant intactId="EBI-396669">
        <id>Q9Y3C5</id>
    </interactant>
    <interactant intactId="EBI-18577082">
        <id>O15381-5</id>
        <label>NVL</label>
    </interactant>
    <organismsDiffer>false</organismsDiffer>
    <experiments>3</experiments>
</comment>
<comment type="interaction">
    <interactant intactId="EBI-396669">
        <id>Q9Y3C5</id>
    </interactant>
    <interactant intactId="EBI-9090919">
        <id>Q5BJF6-2</id>
        <label>ODF2</label>
    </interactant>
    <organismsDiffer>false</organismsDiffer>
    <experiments>3</experiments>
</comment>
<comment type="interaction">
    <interactant intactId="EBI-396669">
        <id>Q9Y3C5</id>
    </interactant>
    <interactant intactId="EBI-1058491">
        <id>Q96FW1</id>
        <label>OTUB1</label>
    </interactant>
    <organismsDiffer>false</organismsDiffer>
    <experiments>3</experiments>
</comment>
<comment type="interaction">
    <interactant intactId="EBI-396669">
        <id>Q9Y3C5</id>
    </interactant>
    <interactant intactId="EBI-25830200">
        <id>Q6GQQ9-2</id>
        <label>OTUD7B</label>
    </interactant>
    <organismsDiffer>false</organismsDiffer>
    <experiments>3</experiments>
</comment>
<comment type="interaction">
    <interactant intactId="EBI-396669">
        <id>Q9Y3C5</id>
    </interactant>
    <interactant intactId="EBI-17159452">
        <id>Q9NR21-5</id>
        <label>PARP11</label>
    </interactant>
    <organismsDiffer>false</organismsDiffer>
    <experiments>3</experiments>
</comment>
<comment type="interaction">
    <interactant intactId="EBI-396669">
        <id>Q9Y3C5</id>
    </interactant>
    <interactant intactId="EBI-6309018">
        <id>Q9NV79</id>
        <label>PCMTD2</label>
    </interactant>
    <organismsDiffer>false</organismsDiffer>
    <experiments>3</experiments>
</comment>
<comment type="interaction">
    <interactant intactId="EBI-396669">
        <id>Q9Y3C5</id>
    </interactant>
    <interactant intactId="EBI-12832742">
        <id>Q9UF11-2</id>
        <label>PLEKHB1</label>
    </interactant>
    <organismsDiffer>false</organismsDiffer>
    <experiments>3</experiments>
</comment>
<comment type="interaction">
    <interactant intactId="EBI-396669">
        <id>Q9Y3C5</id>
    </interactant>
    <interactant intactId="EBI-12891828">
        <id>Q6ZR37</id>
        <label>PLEKHG7</label>
    </interactant>
    <organismsDiffer>false</organismsDiffer>
    <experiments>3</experiments>
</comment>
<comment type="interaction">
    <interactant intactId="EBI-396669">
        <id>Q9Y3C5</id>
    </interactant>
    <interactant intactId="EBI-11751537">
        <id>Q8NA72-3</id>
        <label>POC5</label>
    </interactant>
    <organismsDiffer>false</organismsDiffer>
    <experiments>3</experiments>
</comment>
<comment type="interaction">
    <interactant intactId="EBI-396669">
        <id>Q9Y3C5</id>
    </interactant>
    <interactant intactId="EBI-1383852">
        <id>P54646</id>
        <label>PRKAA2</label>
    </interactant>
    <organismsDiffer>false</organismsDiffer>
    <experiments>3</experiments>
</comment>
<comment type="interaction">
    <interactant intactId="EBI-396669">
        <id>Q9Y3C5</id>
    </interactant>
    <interactant intactId="EBI-1053424">
        <id>O43741</id>
        <label>PRKAB2</label>
    </interactant>
    <organismsDiffer>false</organismsDiffer>
    <experiments>3</experiments>
</comment>
<comment type="interaction">
    <interactant intactId="EBI-396669">
        <id>Q9Y3C5</id>
    </interactant>
    <interactant intactId="EBI-21251460">
        <id>O60260-5</id>
        <label>PRKN</label>
    </interactant>
    <organismsDiffer>false</organismsDiffer>
    <experiments>3</experiments>
</comment>
<comment type="interaction">
    <interactant intactId="EBI-396669">
        <id>Q9Y3C5</id>
    </interactant>
    <interactant intactId="EBI-4290895">
        <id>P11908</id>
        <label>PRPS2</label>
    </interactant>
    <organismsDiffer>false</organismsDiffer>
    <experiments>3</experiments>
</comment>
<comment type="interaction">
    <interactant intactId="EBI-396669">
        <id>Q9Y3C5</id>
    </interactant>
    <interactant intactId="EBI-603329">
        <id>P40306</id>
        <label>PSMB10</label>
    </interactant>
    <organismsDiffer>false</organismsDiffer>
    <experiments>3</experiments>
</comment>
<comment type="interaction">
    <interactant intactId="EBI-396669">
        <id>Q9Y3C5</id>
    </interactant>
    <interactant intactId="EBI-603350">
        <id>P28070</id>
        <label>PSMB4</label>
    </interactant>
    <organismsDiffer>false</organismsDiffer>
    <experiments>3</experiments>
</comment>
<comment type="interaction">
    <interactant intactId="EBI-396669">
        <id>Q9Y3C5</id>
    </interactant>
    <interactant intactId="EBI-372312">
        <id>P28062-2</id>
        <label>PSMB8</label>
    </interactant>
    <organismsDiffer>false</organismsDiffer>
    <experiments>3</experiments>
</comment>
<comment type="interaction">
    <interactant intactId="EBI-396669">
        <id>Q9Y3C5</id>
    </interactant>
    <interactant intactId="EBI-347462">
        <id>P47897</id>
        <label>QARS1</label>
    </interactant>
    <organismsDiffer>false</organismsDiffer>
    <experiments>10</experiments>
</comment>
<comment type="interaction">
    <interactant intactId="EBI-396669">
        <id>Q9Y3C5</id>
    </interactant>
    <interactant intactId="EBI-14093916">
        <id>Q9UJ41-4</id>
        <label>RABGEF1</label>
    </interactant>
    <organismsDiffer>false</organismsDiffer>
    <experiments>3</experiments>
</comment>
<comment type="interaction">
    <interactant intactId="EBI-396669">
        <id>Q9Y3C5</id>
    </interactant>
    <interactant intactId="EBI-746228">
        <id>Q9Y5P3</id>
        <label>RAI2</label>
    </interactant>
    <organismsDiffer>false</organismsDiffer>
    <experiments>3</experiments>
</comment>
<comment type="interaction">
    <interactant intactId="EBI-396669">
        <id>Q9Y3C5</id>
    </interactant>
    <interactant intactId="EBI-954272">
        <id>Q96PK6</id>
        <label>RBM14</label>
    </interactant>
    <organismsDiffer>false</organismsDiffer>
    <experiments>3</experiments>
</comment>
<comment type="interaction">
    <interactant intactId="EBI-396669">
        <id>Q9Y3C5</id>
    </interactant>
    <interactant intactId="EBI-17589229">
        <id>Q6NTF9-3</id>
        <label>RHBDD2</label>
    </interactant>
    <organismsDiffer>false</organismsDiffer>
    <experiments>3</experiments>
</comment>
<comment type="interaction">
    <interactant intactId="EBI-396669">
        <id>Q9Y3C5</id>
    </interactant>
    <interactant intactId="EBI-714023">
        <id>Q8N5U6</id>
        <label>RNF10</label>
    </interactant>
    <organismsDiffer>false</organismsDiffer>
    <experiments>3</experiments>
</comment>
<comment type="interaction">
    <interactant intactId="EBI-396669">
        <id>Q9Y3C5</id>
    </interactant>
    <interactant intactId="EBI-25829984">
        <id>Q9ULX5</id>
        <label>RNF112</label>
    </interactant>
    <organismsDiffer>false</organismsDiffer>
    <experiments>3</experiments>
</comment>
<comment type="interaction">
    <interactant intactId="EBI-396669">
        <id>Q9Y3C5</id>
    </interactant>
    <interactant intactId="EBI-749039">
        <id>Q8WVD3</id>
        <label>RNF138</label>
    </interactant>
    <organismsDiffer>false</organismsDiffer>
    <experiments>3</experiments>
</comment>
<comment type="interaction">
    <interactant intactId="EBI-396669">
        <id>Q9Y3C5</id>
    </interactant>
    <interactant intactId="EBI-2130308">
        <id>Q9UBS8</id>
        <label>RNF14</label>
    </interactant>
    <organismsDiffer>false</organismsDiffer>
    <experiments>3</experiments>
</comment>
<comment type="interaction">
    <interactant intactId="EBI-396669">
        <id>Q9Y3C5</id>
    </interactant>
    <interactant intactId="EBI-914207">
        <id>Q8IYW5</id>
        <label>RNF168</label>
    </interactant>
    <organismsDiffer>false</organismsDiffer>
    <experiments>4</experiments>
</comment>
<comment type="interaction">
    <interactant intactId="EBI-396669">
        <id>Q9Y3C5</id>
    </interactant>
    <interactant intactId="EBI-743938">
        <id>Q96D59</id>
        <label>RNF183</label>
    </interactant>
    <organismsDiffer>false</organismsDiffer>
    <experiments>3</experiments>
</comment>
<comment type="interaction">
    <interactant intactId="EBI-396669">
        <id>Q9Y3C5</id>
    </interactant>
    <interactant intactId="EBI-751555">
        <id>Q9H0X6</id>
        <label>RNF208</label>
    </interactant>
    <organismsDiffer>false</organismsDiffer>
    <experiments>3</experiments>
</comment>
<comment type="interaction">
    <interactant intactId="EBI-396669">
        <id>Q9Y3C5</id>
    </interactant>
    <interactant intactId="EBI-347895">
        <id>P62244</id>
        <label>RPS15A</label>
    </interactant>
    <organismsDiffer>false</organismsDiffer>
    <experiments>3</experiments>
</comment>
<comment type="interaction">
    <interactant intactId="EBI-396669">
        <id>Q9Y3C5</id>
    </interactant>
    <interactant intactId="EBI-357375">
        <id>P62979</id>
        <label>RPS27A</label>
    </interactant>
    <organismsDiffer>false</organismsDiffer>
    <experiments>4</experiments>
</comment>
<comment type="interaction">
    <interactant intactId="EBI-396669">
        <id>Q9Y3C5</id>
    </interactant>
    <interactant intactId="EBI-10248967">
        <id>Q66K80</id>
        <label>RUSC1-AS1</label>
    </interactant>
    <organismsDiffer>false</organismsDiffer>
    <experiments>3</experiments>
</comment>
<comment type="interaction">
    <interactant intactId="EBI-396669">
        <id>Q9Y3C5</id>
    </interactant>
    <interactant intactId="EBI-752324">
        <id>Q8N488</id>
        <label>RYBP</label>
    </interactant>
    <organismsDiffer>false</organismsDiffer>
    <experiments>3</experiments>
</comment>
<comment type="interaction">
    <interactant intactId="EBI-396669">
        <id>Q9Y3C5</id>
    </interactant>
    <interactant intactId="EBI-12148649">
        <id>Q7Z3H4</id>
        <label>SAMD7</label>
    </interactant>
    <organismsDiffer>false</organismsDiffer>
    <experiments>3</experiments>
</comment>
<comment type="interaction">
    <interactant intactId="EBI-396669">
        <id>Q9Y3C5</id>
    </interactant>
    <interactant intactId="EBI-1172957">
        <id>P34741</id>
        <label>SDC2</label>
    </interactant>
    <organismsDiffer>false</organismsDiffer>
    <experiments>3</experiments>
</comment>
<comment type="interaction">
    <interactant intactId="EBI-396669">
        <id>Q9Y3C5</id>
    </interactant>
    <interactant intactId="EBI-727004">
        <id>O00560</id>
        <label>SDCBP</label>
    </interactant>
    <organismsDiffer>false</organismsDiffer>
    <experiments>3</experiments>
</comment>
<comment type="interaction">
    <interactant intactId="EBI-396669">
        <id>Q9Y3C5</id>
    </interactant>
    <interactant intactId="EBI-9089805">
        <id>Q9NTN9-3</id>
        <label>SEMA4G</label>
    </interactant>
    <organismsDiffer>false</organismsDiffer>
    <experiments>3</experiments>
</comment>
<comment type="interaction">
    <interactant intactId="EBI-396669">
        <id>Q9Y3C5</id>
    </interactant>
    <interactant intactId="EBI-346595">
        <id>Q96B97</id>
        <label>SH3KBP1</label>
    </interactant>
    <organismsDiffer>false</organismsDiffer>
    <experiments>3</experiments>
</comment>
<comment type="interaction">
    <interactant intactId="EBI-396669">
        <id>Q9Y3C5</id>
    </interactant>
    <interactant intactId="EBI-22000547">
        <id>Q9NUL5-3</id>
        <label>SHFL</label>
    </interactant>
    <organismsDiffer>false</organismsDiffer>
    <experiments>3</experiments>
</comment>
<comment type="interaction">
    <interactant intactId="EBI-396669">
        <id>Q9Y3C5</id>
    </interactant>
    <interactant intactId="EBI-9092164">
        <id>O60902-3</id>
        <label>SHOX2</label>
    </interactant>
    <organismsDiffer>false</organismsDiffer>
    <experiments>3</experiments>
</comment>
<comment type="interaction">
    <interactant intactId="EBI-396669">
        <id>Q9Y3C5</id>
    </interactant>
    <interactant intactId="EBI-358545">
        <id>Q9GZS3</id>
        <label>SKIC8</label>
    </interactant>
    <organismsDiffer>false</organismsDiffer>
    <experiments>3</experiments>
</comment>
<comment type="interaction">
    <interactant intactId="EBI-396669">
        <id>Q9Y3C5</id>
    </interactant>
    <interactant intactId="EBI-25831241">
        <id>Q9NSD5-3</id>
        <label>SLC6A13</label>
    </interactant>
    <organismsDiffer>false</organismsDiffer>
    <experiments>3</experiments>
</comment>
<comment type="interaction">
    <interactant intactId="EBI-396669">
        <id>Q9Y3C5</id>
    </interactant>
    <interactant intactId="EBI-9845742">
        <id>Q9HCE7-2</id>
        <label>SMURF1</label>
    </interactant>
    <organismsDiffer>false</organismsDiffer>
    <experiments>3</experiments>
</comment>
<comment type="interaction">
    <interactant intactId="EBI-396669">
        <id>Q9Y3C5</id>
    </interactant>
    <interactant intactId="EBI-396727">
        <id>Q9HAU4</id>
        <label>SMURF2</label>
    </interactant>
    <organismsDiffer>false</organismsDiffer>
    <experiments>5</experiments>
</comment>
<comment type="interaction">
    <interactant intactId="EBI-396669">
        <id>Q9Y3C5</id>
    </interactant>
    <interactant intactId="EBI-1760638">
        <id>Q92966</id>
        <label>SNAPC3</label>
    </interactant>
    <organismsDiffer>false</organismsDiffer>
    <experiments>3</experiments>
</comment>
<comment type="interaction">
    <interactant intactId="EBI-396669">
        <id>Q9Y3C5</id>
    </interactant>
    <interactant intactId="EBI-632715">
        <id>Q13573</id>
        <label>SNW1</label>
    </interactant>
    <organismsDiffer>false</organismsDiffer>
    <experiments>3</experiments>
</comment>
<comment type="interaction">
    <interactant intactId="EBI-396669">
        <id>Q9Y3C5</id>
    </interactant>
    <interactant intactId="EBI-11959123">
        <id>Q99932-2</id>
        <label>SPAG8</label>
    </interactant>
    <organismsDiffer>false</organismsDiffer>
    <experiments>3</experiments>
</comment>
<comment type="interaction">
    <interactant intactId="EBI-396669">
        <id>Q9Y3C5</id>
    </interactant>
    <interactant intactId="EBI-8635958">
        <id>Q6RVD6</id>
        <label>SPATA8</label>
    </interactant>
    <organismsDiffer>false</organismsDiffer>
    <experiments>3</experiments>
</comment>
<comment type="interaction">
    <interactant intactId="EBI-396669">
        <id>Q9Y3C5</id>
    </interactant>
    <interactant intactId="EBI-10174456">
        <id>Q8N865</id>
        <label>SPMIP4</label>
    </interactant>
    <organismsDiffer>false</organismsDiffer>
    <experiments>3</experiments>
</comment>
<comment type="interaction">
    <interactant intactId="EBI-396669">
        <id>Q9Y3C5</id>
    </interactant>
    <interactant intactId="EBI-8345366">
        <id>Q8TCT7-2</id>
        <label>SPPL2B</label>
    </interactant>
    <organismsDiffer>false</organismsDiffer>
    <experiments>3</experiments>
</comment>
<comment type="interaction">
    <interactant intactId="EBI-396669">
        <id>Q9Y3C5</id>
    </interactant>
    <interactant intactId="EBI-7082156">
        <id>Q7Z698</id>
        <label>SPRED2</label>
    </interactant>
    <organismsDiffer>false</organismsDiffer>
    <experiments>3</experiments>
</comment>
<comment type="interaction">
    <interactant intactId="EBI-396669">
        <id>Q9Y3C5</id>
    </interactant>
    <interactant intactId="EBI-354861">
        <id>Q9C004</id>
        <label>SPRY4</label>
    </interactant>
    <organismsDiffer>false</organismsDiffer>
    <experiments>3</experiments>
</comment>
<comment type="interaction">
    <interactant intactId="EBI-396669">
        <id>Q9Y3C5</id>
    </interactant>
    <interactant intactId="EBI-2659201">
        <id>Q96BD6</id>
        <label>SPSB1</label>
    </interactant>
    <organismsDiffer>false</organismsDiffer>
    <experiments>3</experiments>
</comment>
<comment type="interaction">
    <interactant intactId="EBI-396669">
        <id>Q9Y3C5</id>
    </interactant>
    <interactant intactId="EBI-2323209">
        <id>Q99619</id>
        <label>SPSB2</label>
    </interactant>
    <organismsDiffer>false</organismsDiffer>
    <experiments>3</experiments>
</comment>
<comment type="interaction">
    <interactant intactId="EBI-396669">
        <id>Q9Y3C5</id>
    </interactant>
    <interactant intactId="EBI-12025738">
        <id>Q92783-2</id>
        <label>STAM</label>
    </interactant>
    <organismsDiffer>false</organismsDiffer>
    <experiments>3</experiments>
</comment>
<comment type="interaction">
    <interactant intactId="EBI-396669">
        <id>Q9Y3C5</id>
    </interactant>
    <interactant intactId="EBI-373258">
        <id>O75886</id>
        <label>STAM2</label>
    </interactant>
    <organismsDiffer>false</organismsDiffer>
    <experiments>4</experiments>
</comment>
<comment type="interaction">
    <interactant intactId="EBI-396669">
        <id>Q9Y3C5</id>
    </interactant>
    <interactant intactId="EBI-396676">
        <id>O95630</id>
        <label>STAMBP</label>
    </interactant>
    <organismsDiffer>false</organismsDiffer>
    <experiments>5</experiments>
</comment>
<comment type="interaction">
    <interactant intactId="EBI-396669">
        <id>Q9Y3C5</id>
    </interactant>
    <interactant intactId="EBI-25861603">
        <id>Q17RD7-3</id>
        <label>SYT16</label>
    </interactant>
    <organismsDiffer>false</organismsDiffer>
    <experiments>3</experiments>
</comment>
<comment type="interaction">
    <interactant intactId="EBI-396669">
        <id>Q9Y3C5</id>
    </interactant>
    <interactant intactId="EBI-17284568">
        <id>Q9BQG1</id>
        <label>SYT3</label>
    </interactant>
    <organismsDiffer>false</organismsDiffer>
    <experiments>3</experiments>
</comment>
<comment type="interaction">
    <interactant intactId="EBI-396669">
        <id>Q9Y3C5</id>
    </interactant>
    <interactant intactId="EBI-745958">
        <id>Q5VWN6</id>
        <label>TASOR2</label>
    </interactant>
    <organismsDiffer>false</organismsDiffer>
    <experiments>3</experiments>
</comment>
<comment type="interaction">
    <interactant intactId="EBI-396669">
        <id>Q9Y3C5</id>
    </interactant>
    <interactant intactId="EBI-529518">
        <id>Q86VP1</id>
        <label>TAX1BP1</label>
    </interactant>
    <organismsDiffer>false</organismsDiffer>
    <experiments>2</experiments>
</comment>
<comment type="interaction">
    <interactant intactId="EBI-396669">
        <id>Q9Y3C5</id>
    </interactant>
    <interactant intactId="EBI-716225">
        <id>P62380</id>
        <label>TBPL1</label>
    </interactant>
    <organismsDiffer>false</organismsDiffer>
    <experiments>3</experiments>
</comment>
<comment type="interaction">
    <interactant intactId="EBI-396669">
        <id>Q9Y3C5</id>
    </interactant>
    <interactant intactId="EBI-2116184">
        <id>Q8IYN2</id>
        <label>TCEAL8</label>
    </interactant>
    <organismsDiffer>false</organismsDiffer>
    <experiments>3</experiments>
</comment>
<comment type="interaction">
    <interactant intactId="EBI-396669">
        <id>Q9Y3C5</id>
    </interactant>
    <interactant intactId="EBI-348333">
        <id>Q13569</id>
        <label>TDG</label>
    </interactant>
    <organismsDiffer>false</organismsDiffer>
    <experiments>3</experiments>
</comment>
<comment type="interaction">
    <interactant intactId="EBI-396669">
        <id>Q9Y3C5</id>
    </interactant>
    <interactant intactId="EBI-12151837">
        <id>P28347-2</id>
        <label>TEAD1</label>
    </interactant>
    <organismsDiffer>false</organismsDiffer>
    <experiments>3</experiments>
</comment>
<comment type="interaction">
    <interactant intactId="EBI-396669">
        <id>Q9Y3C5</id>
    </interactant>
    <interactant intactId="EBI-752030">
        <id>Q96A09</id>
        <label>TENT5B</label>
    </interactant>
    <organismsDiffer>false</organismsDiffer>
    <experiments>3</experiments>
</comment>
<comment type="interaction">
    <interactant intactId="EBI-396669">
        <id>Q9Y3C5</id>
    </interactant>
    <interactant intactId="EBI-13323487">
        <id>Q8NA77</id>
        <label>TEX19</label>
    </interactant>
    <organismsDiffer>false</organismsDiffer>
    <experiments>3</experiments>
</comment>
<comment type="interaction">
    <interactant intactId="EBI-396669">
        <id>Q9Y3C5</id>
    </interactant>
    <interactant intactId="EBI-2372529">
        <id>O60830</id>
        <label>TIMM17B</label>
    </interactant>
    <organismsDiffer>false</organismsDiffer>
    <experiments>3</experiments>
</comment>
<comment type="interaction">
    <interactant intactId="EBI-396669">
        <id>Q9Y3C5</id>
    </interactant>
    <interactant intactId="EBI-711424">
        <id>Q04724</id>
        <label>TLE1</label>
    </interactant>
    <organismsDiffer>false</organismsDiffer>
    <experiments>3</experiments>
</comment>
<comment type="interaction">
    <interactant intactId="EBI-396669">
        <id>Q9Y3C5</id>
    </interactant>
    <interactant intactId="EBI-25830583">
        <id>Q8N0U2</id>
        <label>TMEM61</label>
    </interactant>
    <organismsDiffer>false</organismsDiffer>
    <experiments>3</experiments>
</comment>
<comment type="interaction">
    <interactant intactId="EBI-396669">
        <id>Q9Y3C5</id>
    </interactant>
    <interactant intactId="EBI-10242677">
        <id>Q53NU3</id>
        <label>tmp_locus_54</label>
    </interactant>
    <organismsDiffer>false</organismsDiffer>
    <experiments>3</experiments>
</comment>
<comment type="interaction">
    <interactant intactId="EBI-396669">
        <id>Q9Y3C5</id>
    </interactant>
    <interactant intactId="EBI-25831574">
        <id>Q71RG4-4</id>
        <label>TMUB2</label>
    </interactant>
    <organismsDiffer>false</organismsDiffer>
    <experiments>3</experiments>
</comment>
<comment type="interaction">
    <interactant intactId="EBI-396669">
        <id>Q9Y3C5</id>
    </interactant>
    <interactant intactId="EBI-527670">
        <id>P21580</id>
        <label>TNFAIP3</label>
    </interactant>
    <organismsDiffer>false</organismsDiffer>
    <experiments>2</experiments>
</comment>
<comment type="interaction">
    <interactant intactId="EBI-396669">
        <id>Q9Y3C5</id>
    </interactant>
    <interactant intactId="EBI-74615">
        <id>Q9H0E2</id>
        <label>TOLLIP</label>
    </interactant>
    <organismsDiffer>false</organismsDiffer>
    <experiments>3</experiments>
</comment>
<comment type="interaction">
    <interactant intactId="EBI-396669">
        <id>Q9Y3C5</id>
    </interactant>
    <interactant intactId="EBI-81290">
        <id>P19474</id>
        <label>TRIM21</label>
    </interactant>
    <organismsDiffer>false</organismsDiffer>
    <experiments>3</experiments>
</comment>
<comment type="interaction">
    <interactant intactId="EBI-396669">
        <id>Q9Y3C5</id>
    </interactant>
    <interactant intactId="EBI-17716262">
        <id>Q9UPQ4-2</id>
        <label>TRIM35</label>
    </interactant>
    <organismsDiffer>false</organismsDiffer>
    <experiments>3</experiments>
</comment>
<comment type="interaction">
    <interactant intactId="EBI-396669">
        <id>Q9Y3C5</id>
    </interactant>
    <interactant intactId="EBI-11523450">
        <id>Q9HCM9-2</id>
        <label>TRIM39</label>
    </interactant>
    <organismsDiffer>false</organismsDiffer>
    <experiments>3</experiments>
</comment>
<comment type="interaction">
    <interactant intactId="EBI-396669">
        <id>Q9Y3C5</id>
    </interactant>
    <interactant intactId="EBI-12806590">
        <id>Q86WV8</id>
        <label>TSC1</label>
    </interactant>
    <organismsDiffer>false</organismsDiffer>
    <experiments>3</experiments>
</comment>
<comment type="interaction">
    <interactant intactId="EBI-396669">
        <id>Q9Y3C5</id>
    </interactant>
    <interactant intactId="EBI-739485">
        <id>Q9Y3Q8</id>
        <label>TSC22D4</label>
    </interactant>
    <organismsDiffer>false</organismsDiffer>
    <experiments>3</experiments>
</comment>
<comment type="interaction">
    <interactant intactId="EBI-396669">
        <id>Q9Y3C5</id>
    </interactant>
    <interactant intactId="EBI-10964469">
        <id>Q9UGJ1-2</id>
        <label>TUBGCP4</label>
    </interactant>
    <organismsDiffer>false</organismsDiffer>
    <experiments>3</experiments>
</comment>
<comment type="interaction">
    <interactant intactId="EBI-396669">
        <id>Q9Y3C5</id>
    </interactant>
    <interactant intactId="EBI-357304">
        <id>P62987</id>
        <label>UBA52</label>
    </interactant>
    <organismsDiffer>false</organismsDiffer>
    <experiments>4</experiments>
</comment>
<comment type="interaction">
    <interactant intactId="EBI-396669">
        <id>Q9Y3C5</id>
    </interactant>
    <interactant intactId="EBI-749370">
        <id>Q9BSL1</id>
        <label>UBAC1</label>
    </interactant>
    <organismsDiffer>false</organismsDiffer>
    <experiments>3</experiments>
</comment>
<comment type="interaction">
    <interactant intactId="EBI-396669">
        <id>Q9Y3C5</id>
    </interactant>
    <interactant intactId="EBI-25840976">
        <id>Q8NBM4-4</id>
        <label>UBAC2</label>
    </interactant>
    <organismsDiffer>false</organismsDiffer>
    <experiments>3</experiments>
</comment>
<comment type="interaction">
    <interactant intactId="EBI-396669">
        <id>Q9Y3C5</id>
    </interactant>
    <interactant intactId="EBI-7353612">
        <id>P57075-2</id>
        <label>UBASH3A</label>
    </interactant>
    <organismsDiffer>false</organismsDiffer>
    <experiments>3</experiments>
</comment>
<comment type="interaction">
    <interactant intactId="EBI-396669">
        <id>Q9Y3C5</id>
    </interactant>
    <interactant intactId="EBI-413034">
        <id>P0CG47</id>
        <label>UBB</label>
    </interactant>
    <organismsDiffer>false</organismsDiffer>
    <experiments>4</experiments>
</comment>
<comment type="interaction">
    <interactant intactId="EBI-396669">
        <id>Q9Y3C5</id>
    </interactant>
    <interactant intactId="EBI-743540">
        <id>P51668</id>
        <label>UBE2D1</label>
    </interactant>
    <organismsDiffer>false</organismsDiffer>
    <experiments>9</experiments>
</comment>
<comment type="interaction">
    <interactant intactId="EBI-396669">
        <id>Q9Y3C5</id>
    </interactant>
    <interactant intactId="EBI-347677">
        <id>P62837</id>
        <label>UBE2D2</label>
    </interactant>
    <organismsDiffer>false</organismsDiffer>
    <experiments>10</experiments>
</comment>
<comment type="interaction">
    <interactant intactId="EBI-396669">
        <id>Q9Y3C5</id>
    </interactant>
    <interactant intactId="EBI-348268">
        <id>P61077</id>
        <label>UBE2D3</label>
    </interactant>
    <organismsDiffer>false</organismsDiffer>
    <experiments>3</experiments>
</comment>
<comment type="interaction">
    <interactant intactId="EBI-396669">
        <id>Q9Y3C5</id>
    </interactant>
    <interactant intactId="EBI-745527">
        <id>Q9Y2X8</id>
        <label>UBE2D4</label>
    </interactant>
    <organismsDiffer>false</organismsDiffer>
    <experiments>10</experiments>
</comment>
<comment type="interaction">
    <interactant intactId="EBI-396669">
        <id>Q9Y3C5</id>
    </interactant>
    <interactant intactId="EBI-348546">
        <id>P51965</id>
        <label>UBE2E1</label>
    </interactant>
    <organismsDiffer>false</organismsDiffer>
    <experiments>2</experiments>
</comment>
<comment type="interaction">
    <interactant intactId="EBI-396669">
        <id>Q9Y3C5</id>
    </interactant>
    <interactant intactId="EBI-348496">
        <id>Q969T4</id>
        <label>UBE2E3</label>
    </interactant>
    <organismsDiffer>false</organismsDiffer>
    <experiments>4</experiments>
</comment>
<comment type="interaction">
    <interactant intactId="EBI-396669">
        <id>Q9Y3C5</id>
    </interactant>
    <interactant intactId="EBI-1052908">
        <id>P61088</id>
        <label>UBE2N</label>
    </interactant>
    <organismsDiffer>false</organismsDiffer>
    <experiments>4</experiments>
</comment>
<comment type="interaction">
    <interactant intactId="EBI-396669">
        <id>Q9Y3C5</id>
    </interactant>
    <interactant intactId="EBI-1050671">
        <id>Q13404</id>
        <label>UBE2V1</label>
    </interactant>
    <organismsDiffer>false</organismsDiffer>
    <experiments>4</experiments>
</comment>
<comment type="interaction">
    <interactant intactId="EBI-396669">
        <id>Q9Y3C5</id>
    </interactant>
    <interactant intactId="EBI-947187">
        <id>Q9UHD9</id>
        <label>UBQLN2</label>
    </interactant>
    <organismsDiffer>false</organismsDiffer>
    <experiments>4</experiments>
</comment>
<comment type="interaction">
    <interactant intactId="EBI-396669">
        <id>Q9Y3C5</id>
    </interactant>
    <interactant intactId="EBI-11530712">
        <id>Q04323-2</id>
        <label>UBXN1</label>
    </interactant>
    <organismsDiffer>false</organismsDiffer>
    <experiments>3</experiments>
</comment>
<comment type="interaction">
    <interactant intactId="EBI-396669">
        <id>Q9Y3C5</id>
    </interactant>
    <interactant intactId="EBI-17761788">
        <id>Q96RL1-2</id>
        <label>UIMC1</label>
    </interactant>
    <organismsDiffer>false</organismsDiffer>
    <experiments>3</experiments>
</comment>
<comment type="interaction">
    <interactant intactId="EBI-396669">
        <id>Q9Y3C5</id>
    </interactant>
    <interactant intactId="EBI-10696113">
        <id>O75604-3</id>
        <label>USP2</label>
    </interactant>
    <organismsDiffer>false</organismsDiffer>
    <experiments>3</experiments>
</comment>
<comment type="interaction">
    <interactant intactId="EBI-396669">
        <id>Q9Y3C5</id>
    </interactant>
    <interactant intactId="EBI-354022">
        <id>P45880</id>
        <label>VDAC2</label>
    </interactant>
    <organismsDiffer>false</organismsDiffer>
    <experiments>3</experiments>
</comment>
<comment type="interaction">
    <interactant intactId="EBI-396669">
        <id>Q9Y3C5</id>
    </interactant>
    <interactant intactId="EBI-12157263">
        <id>P40337-2</id>
        <label>VHL</label>
    </interactant>
    <organismsDiffer>false</organismsDiffer>
    <experiments>3</experiments>
</comment>
<comment type="interaction">
    <interactant intactId="EBI-396669">
        <id>Q9Y3C5</id>
    </interactant>
    <interactant intactId="EBI-2850578">
        <id>Q8NEZ2</id>
        <label>VPS37A</label>
    </interactant>
    <organismsDiffer>false</organismsDiffer>
    <experiments>3</experiments>
</comment>
<comment type="interaction">
    <interactant intactId="EBI-396669">
        <id>Q9Y3C5</id>
    </interactant>
    <interactant intactId="EBI-6427899">
        <id>P58304</id>
        <label>VSX2</label>
    </interactant>
    <organismsDiffer>false</organismsDiffer>
    <experiments>3</experiments>
</comment>
<comment type="interaction">
    <interactant intactId="EBI-396669">
        <id>Q9Y3C5</id>
    </interactant>
    <interactant intactId="EBI-1237307">
        <id>Q9BQA1</id>
        <label>WDR77</label>
    </interactant>
    <organismsDiffer>false</organismsDiffer>
    <experiments>3</experiments>
</comment>
<comment type="interaction">
    <interactant intactId="EBI-396669">
        <id>Q9Y3C5</id>
    </interactant>
    <interactant intactId="EBI-7705033">
        <id>Q9BRX9</id>
        <label>WDR83</label>
    </interactant>
    <organismsDiffer>false</organismsDiffer>
    <experiments>3</experiments>
</comment>
<comment type="interaction">
    <interactant intactId="EBI-396669">
        <id>Q9Y3C5</id>
    </interactant>
    <interactant intactId="EBI-12040603">
        <id>Q9NZC7-5</id>
        <label>WWOX</label>
    </interactant>
    <organismsDiffer>false</organismsDiffer>
    <experiments>3</experiments>
</comment>
<comment type="interaction">
    <interactant intactId="EBI-396669">
        <id>Q9Y3C5</id>
    </interactant>
    <interactant intactId="EBI-743923">
        <id>O00308</id>
        <label>WWP2</label>
    </interactant>
    <organismsDiffer>false</organismsDiffer>
    <experiments>7</experiments>
</comment>
<comment type="interaction">
    <interactant intactId="EBI-396669">
        <id>Q9Y3C5</id>
    </interactant>
    <interactant intactId="EBI-353208">
        <id>P12956</id>
        <label>XRCC6</label>
    </interactant>
    <organismsDiffer>false</organismsDiffer>
    <experiments>3</experiments>
</comment>
<comment type="interaction">
    <interactant intactId="EBI-396669">
        <id>Q9Y3C5</id>
    </interactant>
    <interactant intactId="EBI-25842419">
        <id>O43167-2</id>
        <label>ZBTB24</label>
    </interactant>
    <organismsDiffer>false</organismsDiffer>
    <experiments>3</experiments>
</comment>
<comment type="interaction">
    <interactant intactId="EBI-396669">
        <id>Q9Y3C5</id>
    </interactant>
    <interactant intactId="EBI-14104088">
        <id>Q53FD0-2</id>
        <label>ZC2HC1C</label>
    </interactant>
    <organismsDiffer>false</organismsDiffer>
    <experiments>3</experiments>
</comment>
<comment type="interaction">
    <interactant intactId="EBI-396669">
        <id>Q9Y3C5</id>
    </interactant>
    <interactant intactId="EBI-25840130">
        <id>Q5W0Z9-4</id>
        <label>ZDHHC20</label>
    </interactant>
    <organismsDiffer>false</organismsDiffer>
    <experiments>3</experiments>
</comment>
<comment type="interaction">
    <interactant intactId="EBI-396669">
        <id>Q9Y3C5</id>
    </interactant>
    <interactant intactId="EBI-2602314">
        <id>Q15776</id>
        <label>ZKSCAN8</label>
    </interactant>
    <organismsDiffer>false</organismsDiffer>
    <experiments>3</experiments>
</comment>
<comment type="interaction">
    <interactant intactId="EBI-396669">
        <id>Q9Y3C5</id>
    </interactant>
    <interactant intactId="EBI-12055755">
        <id>Q9UJW8-4</id>
        <label>ZNF180</label>
    </interactant>
    <organismsDiffer>false</organismsDiffer>
    <experiments>3</experiments>
</comment>
<comment type="interaction">
    <interactant intactId="EBI-396669">
        <id>Q9Y3C5</id>
    </interactant>
    <interactant intactId="EBI-8834821">
        <id>Q8WUU4</id>
        <label>ZNF296</label>
    </interactant>
    <organismsDiffer>false</organismsDiffer>
    <experiments>3</experiments>
</comment>
<comment type="interaction">
    <interactant intactId="EBI-396669">
        <id>Q9Y3C5</id>
    </interactant>
    <interactant intactId="EBI-12988373">
        <id>Q9NR11-2</id>
        <label>ZNF302</label>
    </interactant>
    <organismsDiffer>false</organismsDiffer>
    <experiments>3</experiments>
</comment>
<comment type="interaction">
    <interactant intactId="EBI-396669">
        <id>Q9Y3C5</id>
    </interactant>
    <interactant intactId="EBI-2813661">
        <id>Q8N895</id>
        <label>ZNF366</label>
    </interactant>
    <organismsDiffer>false</organismsDiffer>
    <experiments>3</experiments>
</comment>
<comment type="interaction">
    <interactant intactId="EBI-396669">
        <id>Q9Y3C5</id>
    </interactant>
    <interactant intactId="EBI-12010736">
        <id>Q8N0Y2-2</id>
        <label>ZNF444</label>
    </interactant>
    <organismsDiffer>false</organismsDiffer>
    <experiments>3</experiments>
</comment>
<comment type="interaction">
    <interactant intactId="EBI-396669">
        <id>Q9Y3C5</id>
    </interactant>
    <interactant intactId="EBI-25831733">
        <id>Q96MN9-2</id>
        <label>ZNF488</label>
    </interactant>
    <organismsDiffer>false</organismsDiffer>
    <experiments>3</experiments>
</comment>
<comment type="interaction">
    <interactant intactId="EBI-396669">
        <id>Q9Y3C5</id>
    </interactant>
    <interactant intactId="EBI-10486136">
        <id>Q6ZNH5</id>
        <label>ZNF497</label>
    </interactant>
    <organismsDiffer>false</organismsDiffer>
    <experiments>3</experiments>
</comment>
<comment type="interaction">
    <interactant intactId="EBI-396669">
        <id>Q9Y3C5</id>
    </interactant>
    <interactant intactId="EBI-10283126">
        <id>Q96C55</id>
        <label>ZNF524</label>
    </interactant>
    <organismsDiffer>false</organismsDiffer>
    <experiments>3</experiments>
</comment>
<comment type="interaction">
    <interactant intactId="EBI-396669">
        <id>Q9Y3C5</id>
    </interactant>
    <interactant intactId="EBI-8490788">
        <id>Q68EA5</id>
        <label>ZNF57</label>
    </interactant>
    <organismsDiffer>false</organismsDiffer>
    <experiments>3</experiments>
</comment>
<comment type="interaction">
    <interactant intactId="EBI-396669">
        <id>Q9Y3C5</id>
    </interactant>
    <interactant intactId="EBI-12939666">
        <id>Q96N77-2</id>
        <label>ZNF641</label>
    </interactant>
    <organismsDiffer>false</organismsDiffer>
    <experiments>3</experiments>
</comment>
<comment type="interaction">
    <interactant intactId="EBI-396669">
        <id>Q9Y3C5</id>
    </interactant>
    <interactant intactId="EBI-745276">
        <id>Q9BS34</id>
        <label>ZNF670</label>
    </interactant>
    <organismsDiffer>false</organismsDiffer>
    <experiments>3</experiments>
</comment>
<comment type="interaction">
    <interactant intactId="EBI-396669">
        <id>Q9Y3C5</id>
    </interactant>
    <interactant intactId="EBI-1538838">
        <id>Q2QGD7</id>
        <label>ZXDC</label>
    </interactant>
    <organismsDiffer>false</organismsDiffer>
    <experiments>3</experiments>
</comment>
<comment type="interaction">
    <interactant intactId="EBI-396669">
        <id>Q9Y3C5</id>
    </interactant>
    <interactant intactId="EBI-10211777">
        <id>A0A384ME25</id>
    </interactant>
    <organismsDiffer>false</organismsDiffer>
    <experiments>3</experiments>
</comment>
<comment type="interaction">
    <interactant intactId="EBI-396669">
        <id>Q9Y3C5</id>
    </interactant>
    <interactant intactId="EBI-25831617">
        <id>B7Z3E8</id>
    </interactant>
    <organismsDiffer>false</organismsDiffer>
    <experiments>3</experiments>
</comment>
<comment type="interaction">
    <interactant intactId="EBI-396669">
        <id>Q9Y3C5</id>
    </interactant>
    <interactant intactId="EBI-25831943">
        <id>Q7L8T7</id>
    </interactant>
    <organismsDiffer>false</organismsDiffer>
    <experiments>3</experiments>
</comment>
<comment type="subcellular location">
    <subcellularLocation>
        <location>Early endosome</location>
    </subcellularLocation>
    <subcellularLocation>
        <location>Recycling endosome</location>
    </subcellularLocation>
    <subcellularLocation>
        <location>Cytoplasm</location>
    </subcellularLocation>
    <subcellularLocation>
        <location>Nucleus</location>
    </subcellularLocation>
    <text evidence="8">Predominantly cytoplasmic, when unphosphorylated, and nuclear, when phosphorylated by PKB/AKT1.</text>
</comment>
<comment type="tissue specificity">
    <text evidence="5 6 9">Expressed at low levels in the lung, liver, kidney, pancreas, spleen, prostate, thymus, ovary, small intestine, colon, and peripheral blood lymphocytes, and, at intermediate levels, in the testis, heart, brain and placenta. Highest expression in the skeletal muscle. In the brain, expressed at different levels in several regions: high levels in the amygdala, moderate in the hippocampus and thalamus, low in the caudate and extremely low levels in the corpus callosum (at protein level). Restricted to neurons, enriched in somatodendritic compartments and excluded from white matter (at protein level). In substantia nigra, present in cell bodies and processes of dopaminergic and nondopaminergic cells (at protein level). In Parkinson disease, sequestered in Lewy bodies and neurites. Overexpressed in breast cancer cells, but not detected in the surrounding stroma and weakly, if at all, in normal breast epithelial cells (at protein level). Also expressed in several tumor cell lines.</text>
</comment>
<comment type="domain">
    <text evidence="1">The PPxY motif mediates interaction with NEDD4.</text>
</comment>
<comment type="PTM">
    <text evidence="6 14">Ubiquitinated in the presence of ITCH, or SMURF2, and UBE2D1, as well as WWP1.</text>
</comment>
<comment type="PTM">
    <text evidence="8">Phosphorylation by PKB/AKT1 may accelerate degradation by the proteasome.</text>
</comment>
<comment type="PTM">
    <text evidence="14">Acylation at both Gly-2 and Cys-4 is required for proper localization to the endosomes.</text>
</comment>
<reference key="1">
    <citation type="journal article" date="1999" name="Biochim. Biophys. Acta">
        <title>Cloning and expression profile of mouse and human genes, Rnf11/RNF11, encoding a novel RING-H2 finger protein.</title>
        <authorList>
            <person name="Seki N."/>
            <person name="Hattori A."/>
            <person name="Hayashi A."/>
            <person name="Kozuma S."/>
            <person name="Sasaki M."/>
            <person name="Suzuki Y."/>
            <person name="Sugano S."/>
            <person name="Muramatsu M."/>
            <person name="Saito T."/>
        </authorList>
    </citation>
    <scope>NUCLEOTIDE SEQUENCE [MRNA]</scope>
</reference>
<reference key="2">
    <citation type="journal article" date="2000" name="Genome Res.">
        <title>Identification of novel human genes evolutionarily conserved in Caenorhabditis elegans by comparative proteomics.</title>
        <authorList>
            <person name="Lai C.-H."/>
            <person name="Chou C.-Y."/>
            <person name="Ch'ang L.-Y."/>
            <person name="Liu C.-S."/>
            <person name="Lin W.-C."/>
        </authorList>
    </citation>
    <scope>NUCLEOTIDE SEQUENCE [LARGE SCALE MRNA]</scope>
</reference>
<reference key="3">
    <citation type="journal article" date="2004" name="Nat. Genet.">
        <title>Complete sequencing and characterization of 21,243 full-length human cDNAs.</title>
        <authorList>
            <person name="Ota T."/>
            <person name="Suzuki Y."/>
            <person name="Nishikawa T."/>
            <person name="Otsuki T."/>
            <person name="Sugiyama T."/>
            <person name="Irie R."/>
            <person name="Wakamatsu A."/>
            <person name="Hayashi K."/>
            <person name="Sato H."/>
            <person name="Nagai K."/>
            <person name="Kimura K."/>
            <person name="Makita H."/>
            <person name="Sekine M."/>
            <person name="Obayashi M."/>
            <person name="Nishi T."/>
            <person name="Shibahara T."/>
            <person name="Tanaka T."/>
            <person name="Ishii S."/>
            <person name="Yamamoto J."/>
            <person name="Saito K."/>
            <person name="Kawai Y."/>
            <person name="Isono Y."/>
            <person name="Nakamura Y."/>
            <person name="Nagahari K."/>
            <person name="Murakami K."/>
            <person name="Yasuda T."/>
            <person name="Iwayanagi T."/>
            <person name="Wagatsuma M."/>
            <person name="Shiratori A."/>
            <person name="Sudo H."/>
            <person name="Hosoiri T."/>
            <person name="Kaku Y."/>
            <person name="Kodaira H."/>
            <person name="Kondo H."/>
            <person name="Sugawara M."/>
            <person name="Takahashi M."/>
            <person name="Kanda K."/>
            <person name="Yokoi T."/>
            <person name="Furuya T."/>
            <person name="Kikkawa E."/>
            <person name="Omura Y."/>
            <person name="Abe K."/>
            <person name="Kamihara K."/>
            <person name="Katsuta N."/>
            <person name="Sato K."/>
            <person name="Tanikawa M."/>
            <person name="Yamazaki M."/>
            <person name="Ninomiya K."/>
            <person name="Ishibashi T."/>
            <person name="Yamashita H."/>
            <person name="Murakawa K."/>
            <person name="Fujimori K."/>
            <person name="Tanai H."/>
            <person name="Kimata M."/>
            <person name="Watanabe M."/>
            <person name="Hiraoka S."/>
            <person name="Chiba Y."/>
            <person name="Ishida S."/>
            <person name="Ono Y."/>
            <person name="Takiguchi S."/>
            <person name="Watanabe S."/>
            <person name="Yosida M."/>
            <person name="Hotuta T."/>
            <person name="Kusano J."/>
            <person name="Kanehori K."/>
            <person name="Takahashi-Fujii A."/>
            <person name="Hara H."/>
            <person name="Tanase T.-O."/>
            <person name="Nomura Y."/>
            <person name="Togiya S."/>
            <person name="Komai F."/>
            <person name="Hara R."/>
            <person name="Takeuchi K."/>
            <person name="Arita M."/>
            <person name="Imose N."/>
            <person name="Musashino K."/>
            <person name="Yuuki H."/>
            <person name="Oshima A."/>
            <person name="Sasaki N."/>
            <person name="Aotsuka S."/>
            <person name="Yoshikawa Y."/>
            <person name="Matsunawa H."/>
            <person name="Ichihara T."/>
            <person name="Shiohata N."/>
            <person name="Sano S."/>
            <person name="Moriya S."/>
            <person name="Momiyama H."/>
            <person name="Satoh N."/>
            <person name="Takami S."/>
            <person name="Terashima Y."/>
            <person name="Suzuki O."/>
            <person name="Nakagawa S."/>
            <person name="Senoh A."/>
            <person name="Mizoguchi H."/>
            <person name="Goto Y."/>
            <person name="Shimizu F."/>
            <person name="Wakebe H."/>
            <person name="Hishigaki H."/>
            <person name="Watanabe T."/>
            <person name="Sugiyama A."/>
            <person name="Takemoto M."/>
            <person name="Kawakami B."/>
            <person name="Yamazaki M."/>
            <person name="Watanabe K."/>
            <person name="Kumagai A."/>
            <person name="Itakura S."/>
            <person name="Fukuzumi Y."/>
            <person name="Fujimori Y."/>
            <person name="Komiyama M."/>
            <person name="Tashiro H."/>
            <person name="Tanigami A."/>
            <person name="Fujiwara T."/>
            <person name="Ono T."/>
            <person name="Yamada K."/>
            <person name="Fujii Y."/>
            <person name="Ozaki K."/>
            <person name="Hirao M."/>
            <person name="Ohmori Y."/>
            <person name="Kawabata A."/>
            <person name="Hikiji T."/>
            <person name="Kobatake N."/>
            <person name="Inagaki H."/>
            <person name="Ikema Y."/>
            <person name="Okamoto S."/>
            <person name="Okitani R."/>
            <person name="Kawakami T."/>
            <person name="Noguchi S."/>
            <person name="Itoh T."/>
            <person name="Shigeta K."/>
            <person name="Senba T."/>
            <person name="Matsumura K."/>
            <person name="Nakajima Y."/>
            <person name="Mizuno T."/>
            <person name="Morinaga M."/>
            <person name="Sasaki M."/>
            <person name="Togashi T."/>
            <person name="Oyama M."/>
            <person name="Hata H."/>
            <person name="Watanabe M."/>
            <person name="Komatsu T."/>
            <person name="Mizushima-Sugano J."/>
            <person name="Satoh T."/>
            <person name="Shirai Y."/>
            <person name="Takahashi Y."/>
            <person name="Nakagawa K."/>
            <person name="Okumura K."/>
            <person name="Nagase T."/>
            <person name="Nomura N."/>
            <person name="Kikuchi H."/>
            <person name="Masuho Y."/>
            <person name="Yamashita R."/>
            <person name="Nakai K."/>
            <person name="Yada T."/>
            <person name="Nakamura Y."/>
            <person name="Ohara O."/>
            <person name="Isogai T."/>
            <person name="Sugano S."/>
        </authorList>
    </citation>
    <scope>NUCLEOTIDE SEQUENCE [LARGE SCALE MRNA]</scope>
</reference>
<reference key="4">
    <citation type="journal article" date="2006" name="Nature">
        <title>The DNA sequence and biological annotation of human chromosome 1.</title>
        <authorList>
            <person name="Gregory S.G."/>
            <person name="Barlow K.F."/>
            <person name="McLay K.E."/>
            <person name="Kaul R."/>
            <person name="Swarbreck D."/>
            <person name="Dunham A."/>
            <person name="Scott C.E."/>
            <person name="Howe K.L."/>
            <person name="Woodfine K."/>
            <person name="Spencer C.C.A."/>
            <person name="Jones M.C."/>
            <person name="Gillson C."/>
            <person name="Searle S."/>
            <person name="Zhou Y."/>
            <person name="Kokocinski F."/>
            <person name="McDonald L."/>
            <person name="Evans R."/>
            <person name="Phillips K."/>
            <person name="Atkinson A."/>
            <person name="Cooper R."/>
            <person name="Jones C."/>
            <person name="Hall R.E."/>
            <person name="Andrews T.D."/>
            <person name="Lloyd C."/>
            <person name="Ainscough R."/>
            <person name="Almeida J.P."/>
            <person name="Ambrose K.D."/>
            <person name="Anderson F."/>
            <person name="Andrew R.W."/>
            <person name="Ashwell R.I.S."/>
            <person name="Aubin K."/>
            <person name="Babbage A.K."/>
            <person name="Bagguley C.L."/>
            <person name="Bailey J."/>
            <person name="Beasley H."/>
            <person name="Bethel G."/>
            <person name="Bird C.P."/>
            <person name="Bray-Allen S."/>
            <person name="Brown J.Y."/>
            <person name="Brown A.J."/>
            <person name="Buckley D."/>
            <person name="Burton J."/>
            <person name="Bye J."/>
            <person name="Carder C."/>
            <person name="Chapman J.C."/>
            <person name="Clark S.Y."/>
            <person name="Clarke G."/>
            <person name="Clee C."/>
            <person name="Cobley V."/>
            <person name="Collier R.E."/>
            <person name="Corby N."/>
            <person name="Coville G.J."/>
            <person name="Davies J."/>
            <person name="Deadman R."/>
            <person name="Dunn M."/>
            <person name="Earthrowl M."/>
            <person name="Ellington A.G."/>
            <person name="Errington H."/>
            <person name="Frankish A."/>
            <person name="Frankland J."/>
            <person name="French L."/>
            <person name="Garner P."/>
            <person name="Garnett J."/>
            <person name="Gay L."/>
            <person name="Ghori M.R.J."/>
            <person name="Gibson R."/>
            <person name="Gilby L.M."/>
            <person name="Gillett W."/>
            <person name="Glithero R.J."/>
            <person name="Grafham D.V."/>
            <person name="Griffiths C."/>
            <person name="Griffiths-Jones S."/>
            <person name="Grocock R."/>
            <person name="Hammond S."/>
            <person name="Harrison E.S.I."/>
            <person name="Hart E."/>
            <person name="Haugen E."/>
            <person name="Heath P.D."/>
            <person name="Holmes S."/>
            <person name="Holt K."/>
            <person name="Howden P.J."/>
            <person name="Hunt A.R."/>
            <person name="Hunt S.E."/>
            <person name="Hunter G."/>
            <person name="Isherwood J."/>
            <person name="James R."/>
            <person name="Johnson C."/>
            <person name="Johnson D."/>
            <person name="Joy A."/>
            <person name="Kay M."/>
            <person name="Kershaw J.K."/>
            <person name="Kibukawa M."/>
            <person name="Kimberley A.M."/>
            <person name="King A."/>
            <person name="Knights A.J."/>
            <person name="Lad H."/>
            <person name="Laird G."/>
            <person name="Lawlor S."/>
            <person name="Leongamornlert D.A."/>
            <person name="Lloyd D.M."/>
            <person name="Loveland J."/>
            <person name="Lovell J."/>
            <person name="Lush M.J."/>
            <person name="Lyne R."/>
            <person name="Martin S."/>
            <person name="Mashreghi-Mohammadi M."/>
            <person name="Matthews L."/>
            <person name="Matthews N.S.W."/>
            <person name="McLaren S."/>
            <person name="Milne S."/>
            <person name="Mistry S."/>
            <person name="Moore M.J.F."/>
            <person name="Nickerson T."/>
            <person name="O'Dell C.N."/>
            <person name="Oliver K."/>
            <person name="Palmeiri A."/>
            <person name="Palmer S.A."/>
            <person name="Parker A."/>
            <person name="Patel D."/>
            <person name="Pearce A.V."/>
            <person name="Peck A.I."/>
            <person name="Pelan S."/>
            <person name="Phelps K."/>
            <person name="Phillimore B.J."/>
            <person name="Plumb R."/>
            <person name="Rajan J."/>
            <person name="Raymond C."/>
            <person name="Rouse G."/>
            <person name="Saenphimmachak C."/>
            <person name="Sehra H.K."/>
            <person name="Sheridan E."/>
            <person name="Shownkeen R."/>
            <person name="Sims S."/>
            <person name="Skuce C.D."/>
            <person name="Smith M."/>
            <person name="Steward C."/>
            <person name="Subramanian S."/>
            <person name="Sycamore N."/>
            <person name="Tracey A."/>
            <person name="Tromans A."/>
            <person name="Van Helmond Z."/>
            <person name="Wall M."/>
            <person name="Wallis J.M."/>
            <person name="White S."/>
            <person name="Whitehead S.L."/>
            <person name="Wilkinson J.E."/>
            <person name="Willey D.L."/>
            <person name="Williams H."/>
            <person name="Wilming L."/>
            <person name="Wray P.W."/>
            <person name="Wu Z."/>
            <person name="Coulson A."/>
            <person name="Vaudin M."/>
            <person name="Sulston J.E."/>
            <person name="Durbin R.M."/>
            <person name="Hubbard T."/>
            <person name="Wooster R."/>
            <person name="Dunham I."/>
            <person name="Carter N.P."/>
            <person name="McVean G."/>
            <person name="Ross M.T."/>
            <person name="Harrow J."/>
            <person name="Olson M.V."/>
            <person name="Beck S."/>
            <person name="Rogers J."/>
            <person name="Bentley D.R."/>
        </authorList>
    </citation>
    <scope>NUCLEOTIDE SEQUENCE [LARGE SCALE GENOMIC DNA]</scope>
</reference>
<reference key="5">
    <citation type="submission" date="2005-09" db="EMBL/GenBank/DDBJ databases">
        <authorList>
            <person name="Mural R.J."/>
            <person name="Istrail S."/>
            <person name="Sutton G.G."/>
            <person name="Florea L."/>
            <person name="Halpern A.L."/>
            <person name="Mobarry C.M."/>
            <person name="Lippert R."/>
            <person name="Walenz B."/>
            <person name="Shatkay H."/>
            <person name="Dew I."/>
            <person name="Miller J.R."/>
            <person name="Flanigan M.J."/>
            <person name="Edwards N.J."/>
            <person name="Bolanos R."/>
            <person name="Fasulo D."/>
            <person name="Halldorsson B.V."/>
            <person name="Hannenhalli S."/>
            <person name="Turner R."/>
            <person name="Yooseph S."/>
            <person name="Lu F."/>
            <person name="Nusskern D.R."/>
            <person name="Shue B.C."/>
            <person name="Zheng X.H."/>
            <person name="Zhong F."/>
            <person name="Delcher A.L."/>
            <person name="Huson D.H."/>
            <person name="Kravitz S.A."/>
            <person name="Mouchard L."/>
            <person name="Reinert K."/>
            <person name="Remington K.A."/>
            <person name="Clark A.G."/>
            <person name="Waterman M.S."/>
            <person name="Eichler E.E."/>
            <person name="Adams M.D."/>
            <person name="Hunkapiller M.W."/>
            <person name="Myers E.W."/>
            <person name="Venter J.C."/>
        </authorList>
    </citation>
    <scope>NUCLEOTIDE SEQUENCE [LARGE SCALE GENOMIC DNA]</scope>
</reference>
<reference key="6">
    <citation type="journal article" date="2004" name="Genome Res.">
        <title>The status, quality, and expansion of the NIH full-length cDNA project: the Mammalian Gene Collection (MGC).</title>
        <authorList>
            <consortium name="The MGC Project Team"/>
        </authorList>
    </citation>
    <scope>NUCLEOTIDE SEQUENCE [LARGE SCALE MRNA]</scope>
    <source>
        <tissue>Brain</tissue>
        <tissue>Skin</tissue>
    </source>
</reference>
<reference key="7">
    <citation type="journal article" date="2005" name="Mol. Cancer Res.">
        <title>Molecular characterization of ring finger protein 11.</title>
        <authorList>
            <person name="Connor M.K."/>
            <person name="Azmi P.B."/>
            <person name="Subramaniam V."/>
            <person name="Li H."/>
            <person name="Seth A.K."/>
        </authorList>
    </citation>
    <scope>PROTEIN SEQUENCE OF 70-113 AND 132-154</scope>
    <scope>PHOSPHORYLATION AT THR-135</scope>
    <scope>SUBCELLULAR LOCATION</scope>
    <scope>INTERACTION WITH 14-3-3</scope>
    <scope>MUTAGENESIS OF THR-135</scope>
</reference>
<reference key="8">
    <citation type="journal article" date="2003" name="Biochim. Biophys. Acta">
        <title>The RING-H2 protein RNF11 is differentially expressed in breast tumours and interacts with HECT-type E3 ligases.</title>
        <authorList>
            <person name="Kitching R."/>
            <person name="Wong M.J."/>
            <person name="Koehler D."/>
            <person name="Burger A.M."/>
            <person name="Landberg G."/>
            <person name="Gish G."/>
            <person name="Seth A.K."/>
        </authorList>
    </citation>
    <scope>INTERACTION WITH ITCH</scope>
    <scope>SUBCELLULAR LOCATION</scope>
    <scope>TISSUE SPECIFICITY</scope>
    <scope>MUTAGENESIS OF TYR-40</scope>
</reference>
<reference key="9">
    <citation type="journal article" date="2003" name="Br. J. Cancer">
        <title>The RING-H2 protein RNF11 is overexpressed in breast cancer and is a target of Smurf2 E3 ligase.</title>
        <authorList>
            <person name="Subramaniam V."/>
            <person name="Li H."/>
            <person name="Wong M.J."/>
            <person name="Kitching R."/>
            <person name="Attisano L."/>
            <person name="Wrana J."/>
            <person name="Zubovits J."/>
            <person name="Burger A.M."/>
            <person name="Seth A.K."/>
        </authorList>
    </citation>
    <scope>TISSUE SPECIFICITY</scope>
    <scope>SUBCELLULAR LOCATION</scope>
    <scope>INTERACTION WITH SMURF2 AND UBE2D1</scope>
    <scope>UBIQUITINATION</scope>
    <scope>MUTAGENESIS OF TYR-40; CYS-99 AND CYS-102</scope>
</reference>
<reference key="10">
    <citation type="journal article" date="2004" name="Oncogene">
        <title>An RNF11: Smurf2 complex mediates ubiquitination of the AMSH protein.</title>
        <authorList>
            <person name="Li H."/>
            <person name="Seth A.K."/>
        </authorList>
    </citation>
    <scope>FUNCTION</scope>
    <scope>INTERACTION WITH ZNF350; EPS15 AND STAMBP</scope>
    <scope>MUTAGENESIS OF TYR-40; CYS-99 AND CYS-102</scope>
</reference>
<reference key="11">
    <citation type="journal article" date="2007" name="J. Neuropathol. Exp. Neurol.">
        <title>PARK10 candidate RNF11 is expressed by vulnerable neurons and localizes to Lewy bodies in Parkinson disease brain.</title>
        <authorList>
            <person name="Anderson L.R."/>
            <person name="Betarbet R."/>
            <person name="Gearing M."/>
            <person name="Gulcher J."/>
            <person name="Hicks A.A."/>
            <person name="Stefansson K."/>
            <person name="Lah J.J."/>
            <person name="Levey A.I."/>
        </authorList>
    </citation>
    <scope>TISSUE SPECIFICITY</scope>
</reference>
<reference key="12">
    <citation type="journal article" date="2008" name="Oncogene">
        <title>The WW domain containing E3 ubiquitin protein ligase 1 upregulates ErbB2 and EGFR through RING finger protein 11.</title>
        <authorList>
            <person name="Chen C."/>
            <person name="Zhou Z."/>
            <person name="Liu R."/>
            <person name="Li Y."/>
            <person name="Azmi P.B."/>
            <person name="Seth A.K."/>
        </authorList>
    </citation>
    <scope>INTERACTION WITH WWP1</scope>
    <scope>MUTAGENESIS OF TYR-40</scope>
</reference>
<reference key="13">
    <citation type="journal article" date="2009" name="EMBO J.">
        <title>The ubiquitin-editing enzyme A20 requires RNF11 to downregulate NF-kappaB signalling.</title>
        <authorList>
            <person name="Shembade N."/>
            <person name="Parvatiyar K."/>
            <person name="Harhaj N.S."/>
            <person name="Harhaj E.W."/>
        </authorList>
    </citation>
    <scope>INTERACTION WITH TAX1BP1; TNFAIP3 AND RIPK1</scope>
    <scope>MUTAGENESIS OF TYR-40 AND CYS-99</scope>
</reference>
<reference key="14">
    <citation type="journal article" date="2009" name="Proteins">
        <title>Analysis of electrostatic contributions to the selectivity of interactions between RING-finger domains and ubiquitin-conjugating enzymes.</title>
        <authorList>
            <person name="Scheper J."/>
            <person name="Oliva B."/>
            <person name="Villa-Freixa J."/>
            <person name="Thomson T.M."/>
        </authorList>
    </citation>
    <scope>INTERACTION WITH UBE2N</scope>
    <scope>MUTAGENESIS OF MET-103; ASP-127 AND ASP-128</scope>
</reference>
<reference key="15">
    <citation type="journal article" date="2010" name="Oncogene">
        <title>Multiple modification and protein interaction signals drive the Ring finger protein 11 (RNF11) E3 ligase to the endosomal compartment.</title>
        <authorList>
            <person name="Santonico E."/>
            <person name="Belleudi F."/>
            <person name="Panni S."/>
            <person name="Torrisi M.R."/>
            <person name="Cesareni G."/>
            <person name="Castagnoli L."/>
        </authorList>
    </citation>
    <scope>INTERACTION WITH GGA1</scope>
    <scope>MYRISTOYLATION AT GLY-2</scope>
    <scope>PALMITOYLATION AT CYS-4</scope>
    <scope>UBIQUITINATION BY ITCH</scope>
    <scope>MUTAGENESIS OF GLY-2; CYS-4; ASP-12; LEU-15; LEU-16; CYS-99 AND CYS-102</scope>
</reference>
<reference key="16">
    <citation type="journal article" date="2010" name="Proteomics">
        <title>Strategy for comprehensive identification of human N-myristoylated proteins using an insect cell-free protein synthesis system.</title>
        <authorList>
            <person name="Suzuki T."/>
            <person name="Moriya K."/>
            <person name="Nagatoshi K."/>
            <person name="Ota Y."/>
            <person name="Ezure T."/>
            <person name="Ando E."/>
            <person name="Tsunasawa S."/>
            <person name="Utsumi T."/>
        </authorList>
    </citation>
    <scope>MYRISTOYLATION AT GLY-2</scope>
</reference>
<reference key="17">
    <citation type="journal article" date="2013" name="J. Proteome Res.">
        <title>Toward a comprehensive characterization of a human cancer cell phosphoproteome.</title>
        <authorList>
            <person name="Zhou H."/>
            <person name="Di Palma S."/>
            <person name="Preisinger C."/>
            <person name="Peng M."/>
            <person name="Polat A.N."/>
            <person name="Heck A.J."/>
            <person name="Mohammed S."/>
        </authorList>
    </citation>
    <scope>PHOSPHORYLATION [LARGE SCALE ANALYSIS] AT SER-14</scope>
    <scope>IDENTIFICATION BY MASS SPECTROMETRY [LARGE SCALE ANALYSIS]</scope>
    <source>
        <tissue>Cervix carcinoma</tissue>
        <tissue>Erythroleukemia</tissue>
    </source>
</reference>
<reference key="18">
    <citation type="journal article" date="2014" name="J. Proteomics">
        <title>An enzyme assisted RP-RPLC approach for in-depth analysis of human liver phosphoproteome.</title>
        <authorList>
            <person name="Bian Y."/>
            <person name="Song C."/>
            <person name="Cheng K."/>
            <person name="Dong M."/>
            <person name="Wang F."/>
            <person name="Huang J."/>
            <person name="Sun D."/>
            <person name="Wang L."/>
            <person name="Ye M."/>
            <person name="Zou H."/>
        </authorList>
    </citation>
    <scope>IDENTIFICATION BY MASS SPECTROMETRY [LARGE SCALE ANALYSIS]</scope>
    <source>
        <tissue>Liver</tissue>
    </source>
</reference>
<sequence>MGNCLKSPTSDDISLLHESQSDRASFGEGTEPDQEPPPPYQEQVPVPVYHPTPSQTRLATQLTEEEQIRIAQRIGLIQHLPKGVYDPGRDGSEKKIRECVICMMDFVYGDPIRFLPCMHIYHLDCIDDWLMRSFTCPSCMEPVDAALLSSYETN</sequence>
<organism>
    <name type="scientific">Homo sapiens</name>
    <name type="common">Human</name>
    <dbReference type="NCBI Taxonomy" id="9606"/>
    <lineage>
        <taxon>Eukaryota</taxon>
        <taxon>Metazoa</taxon>
        <taxon>Chordata</taxon>
        <taxon>Craniata</taxon>
        <taxon>Vertebrata</taxon>
        <taxon>Euteleostomi</taxon>
        <taxon>Mammalia</taxon>
        <taxon>Eutheria</taxon>
        <taxon>Euarchontoglires</taxon>
        <taxon>Primates</taxon>
        <taxon>Haplorrhini</taxon>
        <taxon>Catarrhini</taxon>
        <taxon>Hominidae</taxon>
        <taxon>Homo</taxon>
    </lineage>
</organism>
<evidence type="ECO:0000250" key="1"/>
<evidence type="ECO:0000250" key="2">
    <source>
        <dbReference type="UniProtKB" id="Q9QYK7"/>
    </source>
</evidence>
<evidence type="ECO:0000255" key="3">
    <source>
        <dbReference type="PROSITE-ProRule" id="PRU00175"/>
    </source>
</evidence>
<evidence type="ECO:0000256" key="4">
    <source>
        <dbReference type="SAM" id="MobiDB-lite"/>
    </source>
</evidence>
<evidence type="ECO:0000269" key="5">
    <source>
    </source>
</evidence>
<evidence type="ECO:0000269" key="6">
    <source>
    </source>
</evidence>
<evidence type="ECO:0000269" key="7">
    <source>
    </source>
</evidence>
<evidence type="ECO:0000269" key="8">
    <source>
    </source>
</evidence>
<evidence type="ECO:0000269" key="9">
    <source>
    </source>
</evidence>
<evidence type="ECO:0000269" key="10">
    <source>
    </source>
</evidence>
<evidence type="ECO:0000269" key="11">
    <source>
    </source>
</evidence>
<evidence type="ECO:0000269" key="12">
    <source>
    </source>
</evidence>
<evidence type="ECO:0000269" key="13">
    <source>
    </source>
</evidence>
<evidence type="ECO:0000269" key="14">
    <source>
    </source>
</evidence>
<evidence type="ECO:0000305" key="15"/>
<evidence type="ECO:0007744" key="16">
    <source>
    </source>
</evidence>
<accession>Q9Y3C5</accession>
<accession>A8KAI2</accession>
<accession>Q5T7R8</accession>